<keyword id="KW-0002">3D-structure</keyword>
<keyword id="KW-0025">Alternative splicing</keyword>
<keyword id="KW-0067">ATP-binding</keyword>
<keyword id="KW-0144">Charcot-Marie-Tooth disease</keyword>
<keyword id="KW-0209">Deafness</keyword>
<keyword id="KW-0903">Direct protein sequencing</keyword>
<keyword id="KW-0225">Disease variant</keyword>
<keyword id="KW-0335">Gout</keyword>
<keyword id="KW-0991">Intellectual disability</keyword>
<keyword id="KW-0418">Kinase</keyword>
<keyword id="KW-0460">Magnesium</keyword>
<keyword id="KW-0479">Metal-binding</keyword>
<keyword id="KW-0523">Neurodegeneration</keyword>
<keyword id="KW-0622">Neuropathy</keyword>
<keyword id="KW-1010">Non-syndromic deafness</keyword>
<keyword id="KW-0545">Nucleotide biosynthesis</keyword>
<keyword id="KW-0547">Nucleotide-binding</keyword>
<keyword id="KW-1267">Proteomics identification</keyword>
<keyword id="KW-1185">Reference proteome</keyword>
<keyword id="KW-0682">Retinitis pigmentosa</keyword>
<keyword id="KW-0808">Transferase</keyword>
<name>PRPS1_HUMAN</name>
<gene>
    <name evidence="17" type="primary">PRPS1</name>
</gene>
<sequence>MPNIKIFSGSSHQDLSQKIADRLGLELGKVVTKKFSNQETCVEIGESVRGEDVYIVQSGCGEINDNLMELLIMINACKIASASRVTAVIPCFPYARQDKKDKSRAPISAKLVANMLSVAGADHIITMDLHASQIQGFFDIPVDNLYAEPAVLKWIRENISEWRNCTIVSPDAGGAKRVTSIADRLNVDFALIHKERKKANEVDRMVLVGDVKDRVAILVDDMADTCGTICHAADKLLSAGATRVYAILTHGIFSGPAISRINNACFEAVVVTNTIPQEDKMKHCSKIQVIDISMILAEAIRRTHNGESVSYLFSHVPL</sequence>
<organism>
    <name type="scientific">Homo sapiens</name>
    <name type="common">Human</name>
    <dbReference type="NCBI Taxonomy" id="9606"/>
    <lineage>
        <taxon>Eukaryota</taxon>
        <taxon>Metazoa</taxon>
        <taxon>Chordata</taxon>
        <taxon>Craniata</taxon>
        <taxon>Vertebrata</taxon>
        <taxon>Euteleostomi</taxon>
        <taxon>Mammalia</taxon>
        <taxon>Eutheria</taxon>
        <taxon>Euarchontoglires</taxon>
        <taxon>Primates</taxon>
        <taxon>Haplorrhini</taxon>
        <taxon>Catarrhini</taxon>
        <taxon>Hominidae</taxon>
        <taxon>Homo</taxon>
    </lineage>
</organism>
<reference key="1">
    <citation type="journal article" date="1990" name="Nucleic Acids Res.">
        <title>Cloning of two distinct copies of human phosphoribosylpyrophosphate synthetase cDNA.</title>
        <authorList>
            <person name="Roessler B.J."/>
            <person name="Bell G."/>
            <person name="Heidler S."/>
            <person name="Seino S."/>
            <person name="Becker M."/>
            <person name="Palella T.D."/>
        </authorList>
    </citation>
    <scope>NUCLEOTIDE SEQUENCE [MRNA] (ISOFORM 1)</scope>
    <source>
        <tissue>Lymphoblast</tissue>
    </source>
</reference>
<reference key="2">
    <citation type="journal article" date="1991" name="J. Biochem.">
        <title>Complete nucleotide sequence of human phosphoribosyl pyrophosphate synthetase subunit I (PRS I) cDNA and a comparison with human and rat PRPS gene families.</title>
        <authorList>
            <person name="Sonoda T."/>
            <person name="Taira M."/>
            <person name="Ishijima S."/>
            <person name="Ishizuka T."/>
            <person name="Iizaka T."/>
            <person name="Tatibana M."/>
        </authorList>
    </citation>
    <scope>NUCLEOTIDE SEQUENCE [MRNA] (ISOFORM 1)</scope>
</reference>
<reference key="3">
    <citation type="journal article" date="2004" name="Nat. Genet.">
        <title>Complete sequencing and characterization of 21,243 full-length human cDNAs.</title>
        <authorList>
            <person name="Ota T."/>
            <person name="Suzuki Y."/>
            <person name="Nishikawa T."/>
            <person name="Otsuki T."/>
            <person name="Sugiyama T."/>
            <person name="Irie R."/>
            <person name="Wakamatsu A."/>
            <person name="Hayashi K."/>
            <person name="Sato H."/>
            <person name="Nagai K."/>
            <person name="Kimura K."/>
            <person name="Makita H."/>
            <person name="Sekine M."/>
            <person name="Obayashi M."/>
            <person name="Nishi T."/>
            <person name="Shibahara T."/>
            <person name="Tanaka T."/>
            <person name="Ishii S."/>
            <person name="Yamamoto J."/>
            <person name="Saito K."/>
            <person name="Kawai Y."/>
            <person name="Isono Y."/>
            <person name="Nakamura Y."/>
            <person name="Nagahari K."/>
            <person name="Murakami K."/>
            <person name="Yasuda T."/>
            <person name="Iwayanagi T."/>
            <person name="Wagatsuma M."/>
            <person name="Shiratori A."/>
            <person name="Sudo H."/>
            <person name="Hosoiri T."/>
            <person name="Kaku Y."/>
            <person name="Kodaira H."/>
            <person name="Kondo H."/>
            <person name="Sugawara M."/>
            <person name="Takahashi M."/>
            <person name="Kanda K."/>
            <person name="Yokoi T."/>
            <person name="Furuya T."/>
            <person name="Kikkawa E."/>
            <person name="Omura Y."/>
            <person name="Abe K."/>
            <person name="Kamihara K."/>
            <person name="Katsuta N."/>
            <person name="Sato K."/>
            <person name="Tanikawa M."/>
            <person name="Yamazaki M."/>
            <person name="Ninomiya K."/>
            <person name="Ishibashi T."/>
            <person name="Yamashita H."/>
            <person name="Murakawa K."/>
            <person name="Fujimori K."/>
            <person name="Tanai H."/>
            <person name="Kimata M."/>
            <person name="Watanabe M."/>
            <person name="Hiraoka S."/>
            <person name="Chiba Y."/>
            <person name="Ishida S."/>
            <person name="Ono Y."/>
            <person name="Takiguchi S."/>
            <person name="Watanabe S."/>
            <person name="Yosida M."/>
            <person name="Hotuta T."/>
            <person name="Kusano J."/>
            <person name="Kanehori K."/>
            <person name="Takahashi-Fujii A."/>
            <person name="Hara H."/>
            <person name="Tanase T.-O."/>
            <person name="Nomura Y."/>
            <person name="Togiya S."/>
            <person name="Komai F."/>
            <person name="Hara R."/>
            <person name="Takeuchi K."/>
            <person name="Arita M."/>
            <person name="Imose N."/>
            <person name="Musashino K."/>
            <person name="Yuuki H."/>
            <person name="Oshima A."/>
            <person name="Sasaki N."/>
            <person name="Aotsuka S."/>
            <person name="Yoshikawa Y."/>
            <person name="Matsunawa H."/>
            <person name="Ichihara T."/>
            <person name="Shiohata N."/>
            <person name="Sano S."/>
            <person name="Moriya S."/>
            <person name="Momiyama H."/>
            <person name="Satoh N."/>
            <person name="Takami S."/>
            <person name="Terashima Y."/>
            <person name="Suzuki O."/>
            <person name="Nakagawa S."/>
            <person name="Senoh A."/>
            <person name="Mizoguchi H."/>
            <person name="Goto Y."/>
            <person name="Shimizu F."/>
            <person name="Wakebe H."/>
            <person name="Hishigaki H."/>
            <person name="Watanabe T."/>
            <person name="Sugiyama A."/>
            <person name="Takemoto M."/>
            <person name="Kawakami B."/>
            <person name="Yamazaki M."/>
            <person name="Watanabe K."/>
            <person name="Kumagai A."/>
            <person name="Itakura S."/>
            <person name="Fukuzumi Y."/>
            <person name="Fujimori Y."/>
            <person name="Komiyama M."/>
            <person name="Tashiro H."/>
            <person name="Tanigami A."/>
            <person name="Fujiwara T."/>
            <person name="Ono T."/>
            <person name="Yamada K."/>
            <person name="Fujii Y."/>
            <person name="Ozaki K."/>
            <person name="Hirao M."/>
            <person name="Ohmori Y."/>
            <person name="Kawabata A."/>
            <person name="Hikiji T."/>
            <person name="Kobatake N."/>
            <person name="Inagaki H."/>
            <person name="Ikema Y."/>
            <person name="Okamoto S."/>
            <person name="Okitani R."/>
            <person name="Kawakami T."/>
            <person name="Noguchi S."/>
            <person name="Itoh T."/>
            <person name="Shigeta K."/>
            <person name="Senba T."/>
            <person name="Matsumura K."/>
            <person name="Nakajima Y."/>
            <person name="Mizuno T."/>
            <person name="Morinaga M."/>
            <person name="Sasaki M."/>
            <person name="Togashi T."/>
            <person name="Oyama M."/>
            <person name="Hata H."/>
            <person name="Watanabe M."/>
            <person name="Komatsu T."/>
            <person name="Mizushima-Sugano J."/>
            <person name="Satoh T."/>
            <person name="Shirai Y."/>
            <person name="Takahashi Y."/>
            <person name="Nakagawa K."/>
            <person name="Okumura K."/>
            <person name="Nagase T."/>
            <person name="Nomura N."/>
            <person name="Kikuchi H."/>
            <person name="Masuho Y."/>
            <person name="Yamashita R."/>
            <person name="Nakai K."/>
            <person name="Yada T."/>
            <person name="Nakamura Y."/>
            <person name="Ohara O."/>
            <person name="Isogai T."/>
            <person name="Sugano S."/>
        </authorList>
    </citation>
    <scope>NUCLEOTIDE SEQUENCE [LARGE SCALE MRNA] (ISOFORMS 1 AND 2)</scope>
</reference>
<reference key="4">
    <citation type="journal article" date="2005" name="Nature">
        <title>The DNA sequence of the human X chromosome.</title>
        <authorList>
            <person name="Ross M.T."/>
            <person name="Grafham D.V."/>
            <person name="Coffey A.J."/>
            <person name="Scherer S."/>
            <person name="McLay K."/>
            <person name="Muzny D."/>
            <person name="Platzer M."/>
            <person name="Howell G.R."/>
            <person name="Burrows C."/>
            <person name="Bird C.P."/>
            <person name="Frankish A."/>
            <person name="Lovell F.L."/>
            <person name="Howe K.L."/>
            <person name="Ashurst J.L."/>
            <person name="Fulton R.S."/>
            <person name="Sudbrak R."/>
            <person name="Wen G."/>
            <person name="Jones M.C."/>
            <person name="Hurles M.E."/>
            <person name="Andrews T.D."/>
            <person name="Scott C.E."/>
            <person name="Searle S."/>
            <person name="Ramser J."/>
            <person name="Whittaker A."/>
            <person name="Deadman R."/>
            <person name="Carter N.P."/>
            <person name="Hunt S.E."/>
            <person name="Chen R."/>
            <person name="Cree A."/>
            <person name="Gunaratne P."/>
            <person name="Havlak P."/>
            <person name="Hodgson A."/>
            <person name="Metzker M.L."/>
            <person name="Richards S."/>
            <person name="Scott G."/>
            <person name="Steffen D."/>
            <person name="Sodergren E."/>
            <person name="Wheeler D.A."/>
            <person name="Worley K.C."/>
            <person name="Ainscough R."/>
            <person name="Ambrose K.D."/>
            <person name="Ansari-Lari M.A."/>
            <person name="Aradhya S."/>
            <person name="Ashwell R.I."/>
            <person name="Babbage A.K."/>
            <person name="Bagguley C.L."/>
            <person name="Ballabio A."/>
            <person name="Banerjee R."/>
            <person name="Barker G.E."/>
            <person name="Barlow K.F."/>
            <person name="Barrett I.P."/>
            <person name="Bates K.N."/>
            <person name="Beare D.M."/>
            <person name="Beasley H."/>
            <person name="Beasley O."/>
            <person name="Beck A."/>
            <person name="Bethel G."/>
            <person name="Blechschmidt K."/>
            <person name="Brady N."/>
            <person name="Bray-Allen S."/>
            <person name="Bridgeman A.M."/>
            <person name="Brown A.J."/>
            <person name="Brown M.J."/>
            <person name="Bonnin D."/>
            <person name="Bruford E.A."/>
            <person name="Buhay C."/>
            <person name="Burch P."/>
            <person name="Burford D."/>
            <person name="Burgess J."/>
            <person name="Burrill W."/>
            <person name="Burton J."/>
            <person name="Bye J.M."/>
            <person name="Carder C."/>
            <person name="Carrel L."/>
            <person name="Chako J."/>
            <person name="Chapman J.C."/>
            <person name="Chavez D."/>
            <person name="Chen E."/>
            <person name="Chen G."/>
            <person name="Chen Y."/>
            <person name="Chen Z."/>
            <person name="Chinault C."/>
            <person name="Ciccodicola A."/>
            <person name="Clark S.Y."/>
            <person name="Clarke G."/>
            <person name="Clee C.M."/>
            <person name="Clegg S."/>
            <person name="Clerc-Blankenburg K."/>
            <person name="Clifford K."/>
            <person name="Cobley V."/>
            <person name="Cole C.G."/>
            <person name="Conquer J.S."/>
            <person name="Corby N."/>
            <person name="Connor R.E."/>
            <person name="David R."/>
            <person name="Davies J."/>
            <person name="Davis C."/>
            <person name="Davis J."/>
            <person name="Delgado O."/>
            <person name="Deshazo D."/>
            <person name="Dhami P."/>
            <person name="Ding Y."/>
            <person name="Dinh H."/>
            <person name="Dodsworth S."/>
            <person name="Draper H."/>
            <person name="Dugan-Rocha S."/>
            <person name="Dunham A."/>
            <person name="Dunn M."/>
            <person name="Durbin K.J."/>
            <person name="Dutta I."/>
            <person name="Eades T."/>
            <person name="Ellwood M."/>
            <person name="Emery-Cohen A."/>
            <person name="Errington H."/>
            <person name="Evans K.L."/>
            <person name="Faulkner L."/>
            <person name="Francis F."/>
            <person name="Frankland J."/>
            <person name="Fraser A.E."/>
            <person name="Galgoczy P."/>
            <person name="Gilbert J."/>
            <person name="Gill R."/>
            <person name="Gloeckner G."/>
            <person name="Gregory S.G."/>
            <person name="Gribble S."/>
            <person name="Griffiths C."/>
            <person name="Grocock R."/>
            <person name="Gu Y."/>
            <person name="Gwilliam R."/>
            <person name="Hamilton C."/>
            <person name="Hart E.A."/>
            <person name="Hawes A."/>
            <person name="Heath P.D."/>
            <person name="Heitmann K."/>
            <person name="Hennig S."/>
            <person name="Hernandez J."/>
            <person name="Hinzmann B."/>
            <person name="Ho S."/>
            <person name="Hoffs M."/>
            <person name="Howden P.J."/>
            <person name="Huckle E.J."/>
            <person name="Hume J."/>
            <person name="Hunt P.J."/>
            <person name="Hunt A.R."/>
            <person name="Isherwood J."/>
            <person name="Jacob L."/>
            <person name="Johnson D."/>
            <person name="Jones S."/>
            <person name="de Jong P.J."/>
            <person name="Joseph S.S."/>
            <person name="Keenan S."/>
            <person name="Kelly S."/>
            <person name="Kershaw J.K."/>
            <person name="Khan Z."/>
            <person name="Kioschis P."/>
            <person name="Klages S."/>
            <person name="Knights A.J."/>
            <person name="Kosiura A."/>
            <person name="Kovar-Smith C."/>
            <person name="Laird G.K."/>
            <person name="Langford C."/>
            <person name="Lawlor S."/>
            <person name="Leversha M."/>
            <person name="Lewis L."/>
            <person name="Liu W."/>
            <person name="Lloyd C."/>
            <person name="Lloyd D.M."/>
            <person name="Loulseged H."/>
            <person name="Loveland J.E."/>
            <person name="Lovell J.D."/>
            <person name="Lozado R."/>
            <person name="Lu J."/>
            <person name="Lyne R."/>
            <person name="Ma J."/>
            <person name="Maheshwari M."/>
            <person name="Matthews L.H."/>
            <person name="McDowall J."/>
            <person name="McLaren S."/>
            <person name="McMurray A."/>
            <person name="Meidl P."/>
            <person name="Meitinger T."/>
            <person name="Milne S."/>
            <person name="Miner G."/>
            <person name="Mistry S.L."/>
            <person name="Morgan M."/>
            <person name="Morris S."/>
            <person name="Mueller I."/>
            <person name="Mullikin J.C."/>
            <person name="Nguyen N."/>
            <person name="Nordsiek G."/>
            <person name="Nyakatura G."/>
            <person name="O'dell C.N."/>
            <person name="Okwuonu G."/>
            <person name="Palmer S."/>
            <person name="Pandian R."/>
            <person name="Parker D."/>
            <person name="Parrish J."/>
            <person name="Pasternak S."/>
            <person name="Patel D."/>
            <person name="Pearce A.V."/>
            <person name="Pearson D.M."/>
            <person name="Pelan S.E."/>
            <person name="Perez L."/>
            <person name="Porter K.M."/>
            <person name="Ramsey Y."/>
            <person name="Reichwald K."/>
            <person name="Rhodes S."/>
            <person name="Ridler K.A."/>
            <person name="Schlessinger D."/>
            <person name="Schueler M.G."/>
            <person name="Sehra H.K."/>
            <person name="Shaw-Smith C."/>
            <person name="Shen H."/>
            <person name="Sheridan E.M."/>
            <person name="Shownkeen R."/>
            <person name="Skuce C.D."/>
            <person name="Smith M.L."/>
            <person name="Sotheran E.C."/>
            <person name="Steingruber H.E."/>
            <person name="Steward C.A."/>
            <person name="Storey R."/>
            <person name="Swann R.M."/>
            <person name="Swarbreck D."/>
            <person name="Tabor P.E."/>
            <person name="Taudien S."/>
            <person name="Taylor T."/>
            <person name="Teague B."/>
            <person name="Thomas K."/>
            <person name="Thorpe A."/>
            <person name="Timms K."/>
            <person name="Tracey A."/>
            <person name="Trevanion S."/>
            <person name="Tromans A.C."/>
            <person name="d'Urso M."/>
            <person name="Verduzco D."/>
            <person name="Villasana D."/>
            <person name="Waldron L."/>
            <person name="Wall M."/>
            <person name="Wang Q."/>
            <person name="Warren J."/>
            <person name="Warry G.L."/>
            <person name="Wei X."/>
            <person name="West A."/>
            <person name="Whitehead S.L."/>
            <person name="Whiteley M.N."/>
            <person name="Wilkinson J.E."/>
            <person name="Willey D.L."/>
            <person name="Williams G."/>
            <person name="Williams L."/>
            <person name="Williamson A."/>
            <person name="Williamson H."/>
            <person name="Wilming L."/>
            <person name="Woodmansey R.L."/>
            <person name="Wray P.W."/>
            <person name="Yen J."/>
            <person name="Zhang J."/>
            <person name="Zhou J."/>
            <person name="Zoghbi H."/>
            <person name="Zorilla S."/>
            <person name="Buck D."/>
            <person name="Reinhardt R."/>
            <person name="Poustka A."/>
            <person name="Rosenthal A."/>
            <person name="Lehrach H."/>
            <person name="Meindl A."/>
            <person name="Minx P.J."/>
            <person name="Hillier L.W."/>
            <person name="Willard H.F."/>
            <person name="Wilson R.K."/>
            <person name="Waterston R.H."/>
            <person name="Rice C.M."/>
            <person name="Vaudin M."/>
            <person name="Coulson A."/>
            <person name="Nelson D.L."/>
            <person name="Weinstock G."/>
            <person name="Sulston J.E."/>
            <person name="Durbin R.M."/>
            <person name="Hubbard T."/>
            <person name="Gibbs R.A."/>
            <person name="Beck S."/>
            <person name="Rogers J."/>
            <person name="Bentley D.R."/>
        </authorList>
    </citation>
    <scope>NUCLEOTIDE SEQUENCE [LARGE SCALE GENOMIC DNA]</scope>
</reference>
<reference key="5">
    <citation type="submission" date="2005-09" db="EMBL/GenBank/DDBJ databases">
        <authorList>
            <person name="Mural R.J."/>
            <person name="Istrail S."/>
            <person name="Sutton G.G."/>
            <person name="Florea L."/>
            <person name="Halpern A.L."/>
            <person name="Mobarry C.M."/>
            <person name="Lippert R."/>
            <person name="Walenz B."/>
            <person name="Shatkay H."/>
            <person name="Dew I."/>
            <person name="Miller J.R."/>
            <person name="Flanigan M.J."/>
            <person name="Edwards N.J."/>
            <person name="Bolanos R."/>
            <person name="Fasulo D."/>
            <person name="Halldorsson B.V."/>
            <person name="Hannenhalli S."/>
            <person name="Turner R."/>
            <person name="Yooseph S."/>
            <person name="Lu F."/>
            <person name="Nusskern D.R."/>
            <person name="Shue B.C."/>
            <person name="Zheng X.H."/>
            <person name="Zhong F."/>
            <person name="Delcher A.L."/>
            <person name="Huson D.H."/>
            <person name="Kravitz S.A."/>
            <person name="Mouchard L."/>
            <person name="Reinert K."/>
            <person name="Remington K.A."/>
            <person name="Clark A.G."/>
            <person name="Waterman M.S."/>
            <person name="Eichler E.E."/>
            <person name="Adams M.D."/>
            <person name="Hunkapiller M.W."/>
            <person name="Myers E.W."/>
            <person name="Venter J.C."/>
        </authorList>
    </citation>
    <scope>NUCLEOTIDE SEQUENCE [LARGE SCALE GENOMIC DNA]</scope>
</reference>
<reference key="6">
    <citation type="journal article" date="2004" name="Genome Res.">
        <title>The status, quality, and expansion of the NIH full-length cDNA project: the Mammalian Gene Collection (MGC).</title>
        <authorList>
            <consortium name="The MGC Project Team"/>
        </authorList>
    </citation>
    <scope>NUCLEOTIDE SEQUENCE [LARGE SCALE MRNA] (ISOFORM 1)</scope>
    <source>
        <tissue>Lymph</tissue>
    </source>
</reference>
<reference key="7">
    <citation type="journal article" date="1992" name="Biochim. Biophys. Acta">
        <title>Promoter regions of the human X-linked housekeeping genes PRPS1 and PRPS2 encoding phosphoribosylpyrophosphate synthetase subunit I and II isoforms.</title>
        <authorList>
            <person name="Ishizuka T."/>
            <person name="Iizasa T."/>
            <person name="Taira M."/>
            <person name="Ishijima S."/>
            <person name="Sonoda T."/>
            <person name="Shimada H."/>
            <person name="Nagatake N."/>
            <person name="Tatibana M."/>
        </authorList>
    </citation>
    <scope>NUCLEOTIDE SEQUENCE [MRNA] OF 1-41 (ISOFORM 1)</scope>
</reference>
<reference key="8">
    <citation type="submission" date="2009-07" db="UniProtKB">
        <authorList>
            <person name="Bienvenut W.V."/>
            <person name="Zebisch A."/>
            <person name="Kolch W."/>
        </authorList>
    </citation>
    <scope>PROTEIN SEQUENCE OF 2-33; 85-96; 164-176; 205-214; 236-260 AND 303-318</scope>
    <scope>CLEAVAGE OF INITIATOR METHIONINE</scope>
    <scope>IDENTIFICATION BY MASS SPECTROMETRY</scope>
    <source>
        <tissue>Colon carcinoma</tissue>
    </source>
</reference>
<reference key="9">
    <citation type="submission" date="2007-03" db="UniProtKB">
        <authorList>
            <person name="Lubec G."/>
            <person name="Vishwanath V."/>
        </authorList>
    </citation>
    <scope>PROTEIN SEQUENCE OF 244-260 AND 303-318</scope>
    <scope>IDENTIFICATION BY MASS SPECTROMETRY</scope>
    <source>
        <tissue>Brain</tissue>
        <tissue>Cajal-Retzius cell</tissue>
    </source>
</reference>
<reference key="10">
    <citation type="journal article" date="2011" name="BMC Syst. Biol.">
        <title>Initial characterization of the human central proteome.</title>
        <authorList>
            <person name="Burkard T.R."/>
            <person name="Planyavsky M."/>
            <person name="Kaupe I."/>
            <person name="Breitwieser F.P."/>
            <person name="Buerckstuemmer T."/>
            <person name="Bennett K.L."/>
            <person name="Superti-Furga G."/>
            <person name="Colinge J."/>
        </authorList>
    </citation>
    <scope>IDENTIFICATION BY MASS SPECTROMETRY [LARGE SCALE ANALYSIS]</scope>
</reference>
<reference key="11">
    <citation type="journal article" date="2007" name="Biochem. J.">
        <title>Crystal structure of human phosphoribosylpyrophosphate synthetase 1 reveals a novel allosteric site.</title>
        <authorList>
            <person name="Li S."/>
            <person name="Lu Y."/>
            <person name="Peng B."/>
            <person name="Ding J."/>
        </authorList>
    </citation>
    <scope>X-RAY CRYSTALLOGRAPHY (2.2 ANGSTROMS) IN COMPLEX WITH AMP</scope>
    <scope>SUBUNIT</scope>
    <scope>MUTAGENESIS OF SER-132; ASN-144 AND TYR-146</scope>
    <scope>FUNCTION</scope>
    <scope>CATALYTIC ACTIVITY</scope>
</reference>
<reference key="12">
    <citation type="journal article" date="1991" name="Clin. Res.">
        <title>Identification of distinct PRPS1 mutations in two patients with X-linked phosphoribosylpyrophosphate synthetase superactivity.</title>
        <authorList>
            <person name="Roessler B.J."/>
            <person name="Palella T.D."/>
            <person name="Heidler S."/>
            <person name="Becker M.A."/>
        </authorList>
    </citation>
    <scope>VARIANTS PRPS1 SUPERACTIVITY SER-114 AND HIS-183</scope>
</reference>
<reference key="13">
    <citation type="journal article" date="1995" name="J. Clin. Invest.">
        <title>The genetic and functional basis of purine nucleotide feedback-resistant phosphoribosylpyrophosphate synthetase superactivity.</title>
        <authorList>
            <person name="Becker M.A."/>
            <person name="Smith P.R."/>
            <person name="Taylor W."/>
            <person name="Mustafi R."/>
            <person name="Switzer R.L."/>
        </authorList>
    </citation>
    <scope>VARIANTS PRPS1 SUPERACTIVITY HIS-52; SER-114; ILE-129; HIS-183; VAL-190 AND GLN-193</scope>
    <scope>FUNCTION</scope>
    <scope>CATALYTIC ACTIVITY</scope>
    <scope>BIOPHYSICOCHEMICAL PROPERTIES</scope>
    <scope>ACTIVITY REGULATION</scope>
    <scope>CHARACTERIZATION OF VARIANTS PRPS1 SUPERACTIVITY HIS-52; SER-114; ILE-129; HIS-183; VAL-190 AND GLN-193</scope>
</reference>
<reference key="14">
    <citation type="journal article" date="2006" name="Science">
        <title>The consensus coding sequences of human breast and colorectal cancers.</title>
        <authorList>
            <person name="Sjoeblom T."/>
            <person name="Jones S."/>
            <person name="Wood L.D."/>
            <person name="Parsons D.W."/>
            <person name="Lin J."/>
            <person name="Barber T.D."/>
            <person name="Mandelker D."/>
            <person name="Leary R.J."/>
            <person name="Ptak J."/>
            <person name="Silliman N."/>
            <person name="Szabo S."/>
            <person name="Buckhaults P."/>
            <person name="Farrell C."/>
            <person name="Meeh P."/>
            <person name="Markowitz S.D."/>
            <person name="Willis J."/>
            <person name="Dawson D."/>
            <person name="Willson J.K.V."/>
            <person name="Gazdar A.F."/>
            <person name="Hartigan J."/>
            <person name="Wu L."/>
            <person name="Liu C."/>
            <person name="Parmigiani G."/>
            <person name="Park B.H."/>
            <person name="Bachman K.E."/>
            <person name="Papadopoulos N."/>
            <person name="Vogelstein B."/>
            <person name="Kinzler K.W."/>
            <person name="Velculescu V.E."/>
        </authorList>
    </citation>
    <scope>VARIANTS [LARGE SCALE ANALYSIS] HIS-203; GLY-219 AND ASP-231</scope>
</reference>
<reference key="15">
    <citation type="journal article" date="2007" name="Am. J. Hum. Genet.">
        <title>Arts syndrome is caused by loss-of-function mutations in PRPS1.</title>
        <authorList>
            <person name="de Brouwer A.P.M."/>
            <person name="Williams K.L."/>
            <person name="Duley J.A."/>
            <person name="van Kuilenburg A.B.P."/>
            <person name="Nabuurs S.B."/>
            <person name="Egmont-Petersen M."/>
            <person name="Lugtenberg D."/>
            <person name="Zoetekouw L."/>
            <person name="Banning M.J.G."/>
            <person name="Roeffen M."/>
            <person name="Hamel B.C.J."/>
            <person name="Weaving L."/>
            <person name="Ouvrier R.A."/>
            <person name="Donald J.A."/>
            <person name="Wevers R.A."/>
            <person name="Christodoulou J."/>
            <person name="van Bokhoven H."/>
        </authorList>
    </citation>
    <scope>VARIANTS ARTS PRO-133 AND PRO-152</scope>
</reference>
<reference key="16">
    <citation type="journal article" date="2007" name="Am. J. Hum. Genet.">
        <title>Mutations in PRPS1, which encodes the phosphoribosyl pyrophosphate synthetase enzyme critical for nucleotide biosynthesis, cause hereditary peripheral neuropathy with hearing loss and optic neuropathy (cmtx5).</title>
        <authorList>
            <person name="Kim H.-J."/>
            <person name="Sohn K.-M."/>
            <person name="Shy M.E."/>
            <person name="Krajewski K.M."/>
            <person name="Hwang M."/>
            <person name="Park J.-H."/>
            <person name="Jang S.-Y."/>
            <person name="Won H.-H."/>
            <person name="Choi B.-O."/>
            <person name="Hong S.H."/>
            <person name="Kim B.-J."/>
            <person name="Suh Y.-L."/>
            <person name="Ki C.-S."/>
            <person name="Lee S.-Y."/>
            <person name="Kim S.-H."/>
            <person name="Kim J.-W."/>
        </authorList>
    </citation>
    <scope>VARIANTS CMTX5 ASP-43 AND THR-115</scope>
    <scope>FUNCTION</scope>
    <scope>CATALYTIC ACTIVITY</scope>
</reference>
<reference key="17">
    <citation type="journal article" date="2010" name="Am. J. Hum. Genet.">
        <title>Loss-of-function mutations in the PRPS1 gene cause a type of nonsyndromic X-linked sensorineural deafness, DFN2.</title>
        <authorList>
            <person name="Liu X."/>
            <person name="Han D."/>
            <person name="Li J."/>
            <person name="Han B."/>
            <person name="Ouyang X."/>
            <person name="Cheng J."/>
            <person name="Li X."/>
            <person name="Jin Z."/>
            <person name="Wang Y."/>
            <person name="Bitner-Glindzicz M."/>
            <person name="Kong X."/>
            <person name="Xu H."/>
            <person name="Kantardzhieva A."/>
            <person name="Eavey R.D."/>
            <person name="Seidman C.E."/>
            <person name="Seidman J.G."/>
            <person name="Du L.L."/>
            <person name="Chen Z.Y."/>
            <person name="Dai P."/>
            <person name="Teng M."/>
            <person name="Yan D."/>
            <person name="Yuan H."/>
        </authorList>
    </citation>
    <scope>VARIANTS DFNX1 ASN-65; THR-87; THR-290 AND ARG-306</scope>
</reference>
<reference key="18">
    <citation type="journal article" date="2012" name="Am. J. Med. Genet. A">
        <title>Phosphoribosylpyrophosphate synthetase superactivity and recurrent infections is caused by a p.Val142Leu mutation in PRS-I.</title>
        <authorList>
            <person name="Moran R."/>
            <person name="Kuilenburg A.B."/>
            <person name="Duley J."/>
            <person name="Nabuurs S.B."/>
            <person name="Retno-Fitri A."/>
            <person name="Christodoulou J."/>
            <person name="Roelofsen J."/>
            <person name="Yntema H.G."/>
            <person name="Friedman N.R."/>
            <person name="van Bokhoven H."/>
            <person name="de Brouwer A.P."/>
        </authorList>
    </citation>
    <scope>INVOLVEMENT IN DISEASE</scope>
    <scope>VARIANT LEU-142</scope>
    <scope>CHARACTERIZATION OF VARIANT LEU-142</scope>
</reference>
<reference key="19">
    <citation type="journal article" date="2014" name="Orphanet J. Rare Dis.">
        <title>Expanding the phenotype of PRPS1 syndromes in females: neuropathy, hearing loss and retinopathy.</title>
        <authorList>
            <person name="Almoguera B."/>
            <person name="He S."/>
            <person name="Corton M."/>
            <person name="Fernandez-San Jose P."/>
            <person name="Blanco-Kelly F."/>
            <person name="Lopez-Molina M."/>
            <person name="Garcia-Sandoval B."/>
            <person name="Del Val J."/>
            <person name="Guo Y."/>
            <person name="Tian L."/>
            <person name="Liu X."/>
            <person name="Guan L."/>
            <person name="Torres R.J."/>
            <person name="Puig J.G."/>
            <person name="Hakonarson H."/>
            <person name="Xu X."/>
            <person name="Keating B."/>
            <person name="Ayuso C."/>
        </authorList>
    </citation>
    <scope>VARIANT PRO-16</scope>
</reference>
<protein>
    <recommendedName>
        <fullName evidence="13">Ribose-phosphate pyrophosphokinase 1</fullName>
        <ecNumber evidence="2 5 9">2.7.6.1</ecNumber>
    </recommendedName>
    <alternativeName>
        <fullName>PPRibP</fullName>
    </alternativeName>
    <alternativeName>
        <fullName>Phosphoribosyl pyrophosphate synthase I</fullName>
        <shortName>PRS-I</shortName>
    </alternativeName>
</protein>
<comment type="function">
    <text evidence="2 5 9">Catalyzes the synthesis of phosphoribosylpyrophosphate (PRPP) that is essential for nucleotide synthesis.</text>
</comment>
<comment type="catalytic activity">
    <reaction evidence="2 5 9">
        <text>D-ribose 5-phosphate + ATP = 5-phospho-alpha-D-ribose 1-diphosphate + AMP + H(+)</text>
        <dbReference type="Rhea" id="RHEA:15609"/>
        <dbReference type="ChEBI" id="CHEBI:15378"/>
        <dbReference type="ChEBI" id="CHEBI:30616"/>
        <dbReference type="ChEBI" id="CHEBI:58017"/>
        <dbReference type="ChEBI" id="CHEBI:78346"/>
        <dbReference type="ChEBI" id="CHEBI:456215"/>
        <dbReference type="EC" id="2.7.6.1"/>
    </reaction>
    <physiologicalReaction direction="left-to-right" evidence="14 15 16">
        <dbReference type="Rhea" id="RHEA:15610"/>
    </physiologicalReaction>
</comment>
<comment type="cofactor">
    <cofactor>
        <name>Mg(2+)</name>
        <dbReference type="ChEBI" id="CHEBI:18420"/>
    </cofactor>
</comment>
<comment type="activity regulation">
    <text evidence="9">Activated by magnesium and inorganic phosphate. Inhibited by ADP and GDP (PubMed:7593598).</text>
</comment>
<comment type="biophysicochemical properties">
    <kinetics>
        <KM evidence="9">23 uM for ATP</KM>
        <KM evidence="9">54 uM for D-ribose 5-phosphate</KM>
    </kinetics>
</comment>
<comment type="pathway">
    <text evidence="2 5">Metabolic intermediate biosynthesis; 5-phospho-alpha-D-ribose 1-diphosphate biosynthesis; 5-phospho-alpha-D-ribose 1-diphosphate from D-ribose 5-phosphate (route I): step 1/1.</text>
</comment>
<comment type="subunit">
    <text evidence="2">Homodimer. The active form is probably a hexamer composed of 3 homodimers.</text>
</comment>
<comment type="interaction">
    <interactant intactId="EBI-749195">
        <id>P60891</id>
    </interactant>
    <interactant intactId="EBI-2556915">
        <id>P13928</id>
        <label>ANXA8</label>
    </interactant>
    <organismsDiffer>false</organismsDiffer>
    <experiments>3</experiments>
</comment>
<comment type="interaction">
    <interactant intactId="EBI-749195">
        <id>P60891</id>
    </interactant>
    <interactant intactId="EBI-77613">
        <id>P05067</id>
        <label>APP</label>
    </interactant>
    <organismsDiffer>false</organismsDiffer>
    <experiments>3</experiments>
</comment>
<comment type="interaction">
    <interactant intactId="EBI-749195">
        <id>P60891</id>
    </interactant>
    <interactant intactId="EBI-19124986">
        <id>O94778</id>
        <label>AQP8</label>
    </interactant>
    <organismsDiffer>false</organismsDiffer>
    <experiments>3</experiments>
</comment>
<comment type="interaction">
    <interactant intactId="EBI-749195">
        <id>P60891</id>
    </interactant>
    <interactant intactId="EBI-2875816">
        <id>Q9NP61</id>
        <label>ARFGAP3</label>
    </interactant>
    <organismsDiffer>false</organismsDiffer>
    <experiments>3</experiments>
</comment>
<comment type="interaction">
    <interactant intactId="EBI-749195">
        <id>P60891</id>
    </interactant>
    <interactant intactId="EBI-25844820">
        <id>Q86TN1</id>
        <label>ARNT2</label>
    </interactant>
    <organismsDiffer>false</organismsDiffer>
    <experiments>3</experiments>
</comment>
<comment type="interaction">
    <interactant intactId="EBI-749195">
        <id>P60891</id>
    </interactant>
    <interactant intactId="EBI-14199987">
        <id>Q9Y575-3</id>
        <label>ASB3</label>
    </interactant>
    <organismsDiffer>false</organismsDiffer>
    <experiments>3</experiments>
</comment>
<comment type="interaction">
    <interactant intactId="EBI-749195">
        <id>P60891</id>
    </interactant>
    <interactant intactId="EBI-10254793">
        <id>Q6XD76</id>
        <label>ASCL4</label>
    </interactant>
    <organismsDiffer>false</organismsDiffer>
    <experiments>3</experiments>
</comment>
<comment type="interaction">
    <interactant intactId="EBI-749195">
        <id>P60891</id>
    </interactant>
    <interactant intactId="EBI-9089489">
        <id>Q96FT7-4</id>
        <label>ASIC4</label>
    </interactant>
    <organismsDiffer>false</organismsDiffer>
    <experiments>3</experiments>
</comment>
<comment type="interaction">
    <interactant intactId="EBI-749195">
        <id>P60891</id>
    </interactant>
    <interactant intactId="EBI-749503">
        <id>Q16520</id>
        <label>BATF</label>
    </interactant>
    <organismsDiffer>false</organismsDiffer>
    <experiments>3</experiments>
</comment>
<comment type="interaction">
    <interactant intactId="EBI-749195">
        <id>P60891</id>
    </interactant>
    <interactant intactId="EBI-12275524">
        <id>P23560-2</id>
        <label>BDNF</label>
    </interactant>
    <organismsDiffer>false</organismsDiffer>
    <experiments>3</experiments>
</comment>
<comment type="interaction">
    <interactant intactId="EBI-749195">
        <id>P60891</id>
    </interactant>
    <interactant intactId="EBI-949378">
        <id>Q14457</id>
        <label>BECN1</label>
    </interactant>
    <organismsDiffer>false</organismsDiffer>
    <experiments>3</experiments>
</comment>
<comment type="interaction">
    <interactant intactId="EBI-749195">
        <id>P60891</id>
    </interactant>
    <interactant intactId="EBI-751596">
        <id>Q96LL4</id>
        <label>C8orf48</label>
    </interactant>
    <organismsDiffer>false</organismsDiffer>
    <experiments>3</experiments>
</comment>
<comment type="interaction">
    <interactant intactId="EBI-749195">
        <id>P60891</id>
    </interactant>
    <interactant intactId="EBI-25850646">
        <id>Q8N5S9-2</id>
        <label>CAMKK1</label>
    </interactant>
    <organismsDiffer>false</organismsDiffer>
    <experiments>3</experiments>
</comment>
<comment type="interaction">
    <interactant intactId="EBI-749195">
        <id>P60891</id>
    </interactant>
    <interactant intactId="EBI-49119542">
        <id>Q6ZP82-1</id>
        <label>CCDC141</label>
    </interactant>
    <organismsDiffer>false</organismsDiffer>
    <experiments>3</experiments>
</comment>
<comment type="interaction">
    <interactant intactId="EBI-749195">
        <id>P60891</id>
    </interactant>
    <interactant intactId="EBI-12165781">
        <id>Q96LX7-5</id>
        <label>CCDC17</label>
    </interactant>
    <organismsDiffer>false</organismsDiffer>
    <experiments>3</experiments>
</comment>
<comment type="interaction">
    <interactant intactId="EBI-749195">
        <id>P60891</id>
    </interactant>
    <interactant intactId="EBI-396137">
        <id>Q9UJX2</id>
        <label>CDC23</label>
    </interactant>
    <organismsDiffer>false</organismsDiffer>
    <experiments>3</experiments>
</comment>
<comment type="interaction">
    <interactant intactId="EBI-749195">
        <id>P60891</id>
    </interactant>
    <interactant intactId="EBI-744045">
        <id>Q9Y3D0</id>
        <label>CIAO2B</label>
    </interactant>
    <organismsDiffer>false</organismsDiffer>
    <experiments>3</experiments>
</comment>
<comment type="interaction">
    <interactant intactId="EBI-749195">
        <id>P60891</id>
    </interactant>
    <interactant intactId="EBI-937732">
        <id>Q99967</id>
        <label>CITED2</label>
    </interactant>
    <organismsDiffer>false</organismsDiffer>
    <experiments>3</experiments>
</comment>
<comment type="interaction">
    <interactant intactId="EBI-749195">
        <id>P60891</id>
    </interactant>
    <interactant intactId="EBI-2872414">
        <id>Q8IUI8</id>
        <label>CRLF3</label>
    </interactant>
    <organismsDiffer>false</organismsDiffer>
    <experiments>3</experiments>
</comment>
<comment type="interaction">
    <interactant intactId="EBI-749195">
        <id>P60891</id>
    </interactant>
    <interactant intactId="EBI-6875961">
        <id>P02489</id>
        <label>CRYAA</label>
    </interactant>
    <organismsDiffer>false</organismsDiffer>
    <experiments>3</experiments>
</comment>
<comment type="interaction">
    <interactant intactId="EBI-749195">
        <id>P60891</id>
    </interactant>
    <interactant intactId="EBI-739060">
        <id>P02511</id>
        <label>CRYAB</label>
    </interactant>
    <organismsDiffer>false</organismsDiffer>
    <experiments>3</experiments>
</comment>
<comment type="interaction">
    <interactant intactId="EBI-749195">
        <id>P60891</id>
    </interactant>
    <interactant intactId="EBI-9915372">
        <id>Q9Y4B6-3</id>
        <label>DCAF1</label>
    </interactant>
    <organismsDiffer>false</organismsDiffer>
    <experiments>3</experiments>
</comment>
<comment type="interaction">
    <interactant intactId="EBI-749195">
        <id>P60891</id>
    </interactant>
    <interactant intactId="EBI-742054">
        <id>Q96D03</id>
        <label>DDIT4L</label>
    </interactant>
    <organismsDiffer>false</organismsDiffer>
    <experiments>3</experiments>
</comment>
<comment type="interaction">
    <interactant intactId="EBI-749195">
        <id>P60891</id>
    </interactant>
    <interactant intactId="EBI-739789">
        <id>Q92997</id>
        <label>DVL3</label>
    </interactant>
    <organismsDiffer>false</organismsDiffer>
    <experiments>3</experiments>
</comment>
<comment type="interaction">
    <interactant intactId="EBI-749195">
        <id>P60891</id>
    </interactant>
    <interactant intactId="EBI-372173">
        <id>O77932</id>
        <label>DXO</label>
    </interactant>
    <organismsDiffer>false</organismsDiffer>
    <experiments>3</experiments>
</comment>
<comment type="interaction">
    <interactant intactId="EBI-749195">
        <id>P60891</id>
    </interactant>
    <interactant intactId="EBI-711990">
        <id>O00303</id>
        <label>EIF3F</label>
    </interactant>
    <organismsDiffer>false</organismsDiffer>
    <experiments>3</experiments>
</comment>
<comment type="interaction">
    <interactant intactId="EBI-749195">
        <id>P60891</id>
    </interactant>
    <interactant intactId="EBI-16466949">
        <id>Q13216-2</id>
        <label>ERCC8</label>
    </interactant>
    <organismsDiffer>false</organismsDiffer>
    <experiments>3</experiments>
</comment>
<comment type="interaction">
    <interactant intactId="EBI-749195">
        <id>P60891</id>
    </interactant>
    <interactant intactId="EBI-12902289">
        <id>Q6P587-2</id>
        <label>FAHD1</label>
    </interactant>
    <organismsDiffer>false</organismsDiffer>
    <experiments>3</experiments>
</comment>
<comment type="interaction">
    <interactant intactId="EBI-749195">
        <id>P60891</id>
    </interactant>
    <interactant intactId="EBI-3893327">
        <id>Q6P1L5</id>
        <label>FAM117B</label>
    </interactant>
    <organismsDiffer>false</organismsDiffer>
    <experiments>3</experiments>
</comment>
<comment type="interaction">
    <interactant intactId="EBI-749195">
        <id>P60891</id>
    </interactant>
    <interactant intactId="EBI-81610">
        <id>O15287</id>
        <label>FANCG</label>
    </interactant>
    <organismsDiffer>false</organismsDiffer>
    <experiments>3</experiments>
</comment>
<comment type="interaction">
    <interactant intactId="EBI-749195">
        <id>P60891</id>
    </interactant>
    <interactant intactId="EBI-719781">
        <id>O00757</id>
        <label>FBP2</label>
    </interactant>
    <organismsDiffer>false</organismsDiffer>
    <experiments>3</experiments>
</comment>
<comment type="interaction">
    <interactant intactId="EBI-749195">
        <id>P60891</id>
    </interactant>
    <interactant intactId="EBI-396453">
        <id>Q9UHY8</id>
        <label>FEZ2</label>
    </interactant>
    <organismsDiffer>false</organismsDiffer>
    <experiments>3</experiments>
</comment>
<comment type="interaction">
    <interactant intactId="EBI-749195">
        <id>P60891</id>
    </interactant>
    <interactant intactId="EBI-10226858">
        <id>Q0VDC6</id>
        <label>FKBP1A</label>
    </interactant>
    <organismsDiffer>false</organismsDiffer>
    <experiments>3</experiments>
</comment>
<comment type="interaction">
    <interactant intactId="EBI-749195">
        <id>P60891</id>
    </interactant>
    <interactant intactId="EBI-9090198">
        <id>P15976-2</id>
        <label>GATA1</label>
    </interactant>
    <organismsDiffer>false</organismsDiffer>
    <experiments>3</experiments>
</comment>
<comment type="interaction">
    <interactant intactId="EBI-749195">
        <id>P60891</id>
    </interactant>
    <interactant intactId="EBI-8799578">
        <id>Q9NXC2</id>
        <label>GFOD1</label>
    </interactant>
    <organismsDiffer>false</organismsDiffer>
    <experiments>3</experiments>
</comment>
<comment type="interaction">
    <interactant intactId="EBI-749195">
        <id>P60891</id>
    </interactant>
    <interactant intactId="EBI-739467">
        <id>Q9H8Y8</id>
        <label>GORASP2</label>
    </interactant>
    <organismsDiffer>false</organismsDiffer>
    <experiments>6</experiments>
</comment>
<comment type="interaction">
    <interactant intactId="EBI-749195">
        <id>P60891</id>
    </interactant>
    <interactant intactId="EBI-2965780">
        <id>P52790</id>
        <label>HK3</label>
    </interactant>
    <organismsDiffer>false</organismsDiffer>
    <experiments>3</experiments>
</comment>
<comment type="interaction">
    <interactant intactId="EBI-749195">
        <id>P60891</id>
    </interactant>
    <interactant intactId="EBI-17178971">
        <id>Q14005-2</id>
        <label>IL16</label>
    </interactant>
    <organismsDiffer>false</organismsDiffer>
    <experiments>3</experiments>
</comment>
<comment type="interaction">
    <interactant intactId="EBI-749195">
        <id>P60891</id>
    </interactant>
    <interactant intactId="EBI-10238842">
        <id>Q8IXL9</id>
        <label>IQCF2</label>
    </interactant>
    <organismsDiffer>false</organismsDiffer>
    <experiments>3</experiments>
</comment>
<comment type="interaction">
    <interactant intactId="EBI-749195">
        <id>P60891</id>
    </interactant>
    <interactant intactId="EBI-742916">
        <id>Q8WZ19</id>
        <label>KCTD13</label>
    </interactant>
    <organismsDiffer>false</organismsDiffer>
    <experiments>3</experiments>
</comment>
<comment type="interaction">
    <interactant intactId="EBI-749195">
        <id>P60891</id>
    </interactant>
    <interactant intactId="EBI-12382297">
        <id>Q96SI1-2</id>
        <label>KCTD15</label>
    </interactant>
    <organismsDiffer>false</organismsDiffer>
    <experiments>3</experiments>
</comment>
<comment type="interaction">
    <interactant intactId="EBI-749195">
        <id>P60891</id>
    </interactant>
    <interactant intactId="EBI-739493">
        <id>Q6ZU52</id>
        <label>KIAA0408</label>
    </interactant>
    <organismsDiffer>false</organismsDiffer>
    <experiments>3</experiments>
</comment>
<comment type="interaction">
    <interactant intactId="EBI-749195">
        <id>P60891</id>
    </interactant>
    <interactant intactId="EBI-10975473">
        <id>O60333-2</id>
        <label>KIF1B</label>
    </interactant>
    <organismsDiffer>false</organismsDiffer>
    <experiments>3</experiments>
</comment>
<comment type="interaction">
    <interactant intactId="EBI-749195">
        <id>P60891</id>
    </interactant>
    <interactant intactId="EBI-8472267">
        <id>P57682</id>
        <label>KLF3</label>
    </interactant>
    <organismsDiffer>false</organismsDiffer>
    <experiments>3</experiments>
</comment>
<comment type="interaction">
    <interactant intactId="EBI-749195">
        <id>P60891</id>
    </interactant>
    <interactant intactId="EBI-714379">
        <id>Q9Y2M5</id>
        <label>KLHL20</label>
    </interactant>
    <organismsDiffer>false</organismsDiffer>
    <experiments>3</experiments>
</comment>
<comment type="interaction">
    <interactant intactId="EBI-749195">
        <id>P60891</id>
    </interactant>
    <interactant intactId="EBI-1049638">
        <id>Q14525</id>
        <label>KRT33B</label>
    </interactant>
    <organismsDiffer>false</organismsDiffer>
    <experiments>3</experiments>
</comment>
<comment type="interaction">
    <interactant intactId="EBI-749195">
        <id>P60891</id>
    </interactant>
    <interactant intactId="EBI-739546">
        <id>Q96PV6</id>
        <label>LENG8</label>
    </interactant>
    <organismsDiffer>false</organismsDiffer>
    <experiments>3</experiments>
</comment>
<comment type="interaction">
    <interactant intactId="EBI-749195">
        <id>P60891</id>
    </interactant>
    <interactant intactId="EBI-9088215">
        <id>A2RU56</id>
        <label>LOC401296</label>
    </interactant>
    <organismsDiffer>false</organismsDiffer>
    <experiments>3</experiments>
</comment>
<comment type="interaction">
    <interactant intactId="EBI-749195">
        <id>P60891</id>
    </interactant>
    <interactant intactId="EBI-12056869">
        <id>Q9UDY8-2</id>
        <label>MALT1</label>
    </interactant>
    <organismsDiffer>false</organismsDiffer>
    <experiments>3</experiments>
</comment>
<comment type="interaction">
    <interactant intactId="EBI-749195">
        <id>P60891</id>
    </interactant>
    <interactant intactId="EBI-476263">
        <id>Q99683</id>
        <label>MAP3K5</label>
    </interactant>
    <organismsDiffer>false</organismsDiffer>
    <experiments>3</experiments>
</comment>
<comment type="interaction">
    <interactant intactId="EBI-749195">
        <id>P60891</id>
    </interactant>
    <interactant intactId="EBI-25848049">
        <id>P61244-4</id>
        <label>MAX</label>
    </interactant>
    <organismsDiffer>false</organismsDiffer>
    <experiments>3</experiments>
</comment>
<comment type="interaction">
    <interactant intactId="EBI-749195">
        <id>P60891</id>
    </interactant>
    <interactant intactId="EBI-1189067">
        <id>P51608</id>
        <label>MECP2</label>
    </interactant>
    <organismsDiffer>false</organismsDiffer>
    <experiments>3</experiments>
</comment>
<comment type="interaction">
    <interactant intactId="EBI-749195">
        <id>P60891</id>
    </interactant>
    <interactant intactId="EBI-12954271">
        <id>Q15528-2</id>
        <label>MED22</label>
    </interactant>
    <organismsDiffer>false</organismsDiffer>
    <experiments>3</experiments>
</comment>
<comment type="interaction">
    <interactant intactId="EBI-749195">
        <id>P60891</id>
    </interactant>
    <interactant intactId="EBI-8487781">
        <id>Q8N6F8</id>
        <label>METTL27</label>
    </interactant>
    <organismsDiffer>false</organismsDiffer>
    <experiments>3</experiments>
</comment>
<comment type="interaction">
    <interactant intactId="EBI-749195">
        <id>P60891</id>
    </interactant>
    <interactant intactId="EBI-1104552">
        <id>Q9NYP9</id>
        <label>MIS18A</label>
    </interactant>
    <organismsDiffer>false</organismsDiffer>
    <experiments>3</experiments>
</comment>
<comment type="interaction">
    <interactant intactId="EBI-749195">
        <id>P60891</id>
    </interactant>
    <interactant intactId="EBI-8475277">
        <id>Q15049</id>
        <label>MLC1</label>
    </interactant>
    <organismsDiffer>false</organismsDiffer>
    <experiments>3</experiments>
</comment>
<comment type="interaction">
    <interactant intactId="EBI-749195">
        <id>P60891</id>
    </interactant>
    <interactant intactId="EBI-2512452">
        <id>Q8N594</id>
        <label>MPND</label>
    </interactant>
    <organismsDiffer>false</organismsDiffer>
    <experiments>3</experiments>
</comment>
<comment type="interaction">
    <interactant intactId="EBI-749195">
        <id>P60891</id>
    </interactant>
    <interactant intactId="EBI-995714">
        <id>Q9Y605</id>
        <label>MRFAP1</label>
    </interactant>
    <organismsDiffer>false</organismsDiffer>
    <experiments>3</experiments>
</comment>
<comment type="interaction">
    <interactant intactId="EBI-749195">
        <id>P60891</id>
    </interactant>
    <interactant intactId="EBI-748896">
        <id>Q96HT8</id>
        <label>MRFAP1L1</label>
    </interactant>
    <organismsDiffer>false</organismsDiffer>
    <experiments>3</experiments>
</comment>
<comment type="interaction">
    <interactant intactId="EBI-749195">
        <id>P60891</id>
    </interactant>
    <interactant intactId="EBI-10178578">
        <id>I6L9F6</id>
        <label>NEFL</label>
    </interactant>
    <organismsDiffer>false</organismsDiffer>
    <experiments>3</experiments>
</comment>
<comment type="interaction">
    <interactant intactId="EBI-749195">
        <id>P60891</id>
    </interactant>
    <interactant intactId="EBI-18577082">
        <id>O15381-5</id>
        <label>NVL</label>
    </interactant>
    <organismsDiffer>false</organismsDiffer>
    <experiments>3</experiments>
</comment>
<comment type="interaction">
    <interactant intactId="EBI-749195">
        <id>P60891</id>
    </interactant>
    <interactant intactId="EBI-536879">
        <id>O43482</id>
        <label>OIP5</label>
    </interactant>
    <organismsDiffer>false</organismsDiffer>
    <experiments>3</experiments>
</comment>
<comment type="interaction">
    <interactant intactId="EBI-749195">
        <id>P60891</id>
    </interactant>
    <interactant intactId="EBI-1058491">
        <id>Q96FW1</id>
        <label>OTUB1</label>
    </interactant>
    <organismsDiffer>false</organismsDiffer>
    <experiments>3</experiments>
</comment>
<comment type="interaction">
    <interactant intactId="EBI-749195">
        <id>P60891</id>
    </interactant>
    <interactant intactId="EBI-25830200">
        <id>Q6GQQ9-2</id>
        <label>OTUD7B</label>
    </interactant>
    <organismsDiffer>false</organismsDiffer>
    <experiments>3</experiments>
</comment>
<comment type="interaction">
    <interactant intactId="EBI-749195">
        <id>P60891</id>
    </interactant>
    <interactant intactId="EBI-11022007">
        <id>Q9HBE1-4</id>
        <label>PATZ1</label>
    </interactant>
    <organismsDiffer>false</organismsDiffer>
    <experiments>3</experiments>
</comment>
<comment type="interaction">
    <interactant intactId="EBI-749195">
        <id>P60891</id>
    </interactant>
    <interactant intactId="EBI-12386584">
        <id>P22061-2</id>
        <label>PCMT1</label>
    </interactant>
    <organismsDiffer>false</organismsDiffer>
    <experiments>3</experiments>
</comment>
<comment type="interaction">
    <interactant intactId="EBI-749195">
        <id>P60891</id>
    </interactant>
    <interactant intactId="EBI-1043580">
        <id>Q9BRX2</id>
        <label>PELO</label>
    </interactant>
    <organismsDiffer>false</organismsDiffer>
    <experiments>3</experiments>
</comment>
<comment type="interaction">
    <interactant intactId="EBI-749195">
        <id>P60891</id>
    </interactant>
    <interactant intactId="EBI-2557276">
        <id>O15534</id>
        <label>PER1</label>
    </interactant>
    <organismsDiffer>false</organismsDiffer>
    <experiments>3</experiments>
</comment>
<comment type="interaction">
    <interactant intactId="EBI-749195">
        <id>P60891</id>
    </interactant>
    <interactant intactId="EBI-12339509">
        <id>Q96LB9</id>
        <label>PGLYRP3</label>
    </interactant>
    <organismsDiffer>false</organismsDiffer>
    <experiments>3</experiments>
</comment>
<comment type="interaction">
    <interactant intactId="EBI-749195">
        <id>P60891</id>
    </interactant>
    <interactant intactId="EBI-2555365">
        <id>Q7RTV0</id>
        <label>PHF5A</label>
    </interactant>
    <organismsDiffer>false</organismsDiffer>
    <experiments>3</experiments>
</comment>
<comment type="interaction">
    <interactant intactId="EBI-749195">
        <id>P60891</id>
    </interactant>
    <interactant intactId="EBI-21503705">
        <id>Q58EX7-2</id>
        <label>PLEKHG4</label>
    </interactant>
    <organismsDiffer>false</organismsDiffer>
    <experiments>3</experiments>
</comment>
<comment type="interaction">
    <interactant intactId="EBI-749195">
        <id>P60891</id>
    </interactant>
    <interactant intactId="EBI-18063495">
        <id>Q8TBJ4</id>
        <label>PLPPR1</label>
    </interactant>
    <organismsDiffer>false</organismsDiffer>
    <experiments>3</experiments>
</comment>
<comment type="interaction">
    <interactant intactId="EBI-749195">
        <id>P60891</id>
    </interactant>
    <interactant intactId="EBI-710067">
        <id>Q9H1D9</id>
        <label>POLR3F</label>
    </interactant>
    <organismsDiffer>false</organismsDiffer>
    <experiments>3</experiments>
</comment>
<comment type="interaction">
    <interactant intactId="EBI-749195">
        <id>P60891</id>
    </interactant>
    <interactant intactId="EBI-749195">
        <id>P60891</id>
        <label>PRPS1</label>
    </interactant>
    <organismsDiffer>false</organismsDiffer>
    <experiments>12</experiments>
</comment>
<comment type="interaction">
    <interactant intactId="EBI-749195">
        <id>P60891</id>
    </interactant>
    <interactant intactId="EBI-4290895">
        <id>P11908</id>
        <label>PRPS2</label>
    </interactant>
    <organismsDiffer>false</organismsDiffer>
    <experiments>12</experiments>
</comment>
<comment type="interaction">
    <interactant intactId="EBI-749195">
        <id>P60891</id>
    </interactant>
    <interactant intactId="EBI-12063547">
        <id>P11908-2</id>
        <label>PRPS2</label>
    </interactant>
    <organismsDiffer>false</organismsDiffer>
    <experiments>4</experiments>
</comment>
<comment type="interaction">
    <interactant intactId="EBI-749195">
        <id>P60891</id>
    </interactant>
    <interactant intactId="EBI-724449">
        <id>Q14558</id>
        <label>PRPSAP1</label>
    </interactant>
    <organismsDiffer>false</organismsDiffer>
    <experiments>13</experiments>
</comment>
<comment type="interaction">
    <interactant intactId="EBI-749195">
        <id>P60891</id>
    </interactant>
    <interactant intactId="EBI-724960">
        <id>O60256</id>
        <label>PRPSAP2</label>
    </interactant>
    <organismsDiffer>false</organismsDiffer>
    <experiments>10</experiments>
</comment>
<comment type="interaction">
    <interactant intactId="EBI-749195">
        <id>P60891</id>
    </interactant>
    <interactant intactId="EBI-746228">
        <id>Q9Y5P3</id>
        <label>RAI2</label>
    </interactant>
    <organismsDiffer>false</organismsDiffer>
    <experiments>3</experiments>
</comment>
<comment type="interaction">
    <interactant intactId="EBI-749195">
        <id>P60891</id>
    </interactant>
    <interactant intactId="EBI-1504830">
        <id>Q9P2K3-2</id>
        <label>RCOR3</label>
    </interactant>
    <organismsDiffer>false</organismsDiffer>
    <experiments>3</experiments>
</comment>
<comment type="interaction">
    <interactant intactId="EBI-749195">
        <id>P60891</id>
    </interactant>
    <interactant intactId="EBI-743938">
        <id>Q96D59</id>
        <label>RNF183</label>
    </interactant>
    <organismsDiffer>false</organismsDiffer>
    <experiments>3</experiments>
</comment>
<comment type="interaction">
    <interactant intactId="EBI-749195">
        <id>P60891</id>
    </interactant>
    <interactant intactId="EBI-11528848">
        <id>Q8N6K7-2</id>
        <label>SAMD3</label>
    </interactant>
    <organismsDiffer>false</organismsDiffer>
    <experiments>3</experiments>
</comment>
<comment type="interaction">
    <interactant intactId="EBI-749195">
        <id>P60891</id>
    </interactant>
    <interactant intactId="EBI-9089805">
        <id>Q9NTN9-3</id>
        <label>SEMA4G</label>
    </interactant>
    <organismsDiffer>false</organismsDiffer>
    <experiments>3</experiments>
</comment>
<comment type="interaction">
    <interactant intactId="EBI-749195">
        <id>P60891</id>
    </interactant>
    <interactant intactId="EBI-11959123">
        <id>Q99932-2</id>
        <label>SPAG8</label>
    </interactant>
    <organismsDiffer>false</organismsDiffer>
    <experiments>3</experiments>
</comment>
<comment type="interaction">
    <interactant intactId="EBI-749195">
        <id>P60891</id>
    </interactant>
    <interactant intactId="EBI-742688">
        <id>Q9NZD8</id>
        <label>SPG21</label>
    </interactant>
    <organismsDiffer>false</organismsDiffer>
    <experiments>8</experiments>
</comment>
<comment type="interaction">
    <interactant intactId="EBI-749195">
        <id>P60891</id>
    </interactant>
    <interactant intactId="EBI-10174456">
        <id>Q8N865</id>
        <label>SPMIP4</label>
    </interactant>
    <organismsDiffer>false</organismsDiffer>
    <experiments>3</experiments>
</comment>
<comment type="interaction">
    <interactant intactId="EBI-749195">
        <id>P60891</id>
    </interactant>
    <interactant intactId="EBI-8345366">
        <id>Q8TCT7-2</id>
        <label>SPPL2B</label>
    </interactant>
    <organismsDiffer>false</organismsDiffer>
    <experiments>3</experiments>
</comment>
<comment type="interaction">
    <interactant intactId="EBI-749195">
        <id>P60891</id>
    </interactant>
    <interactant intactId="EBI-7082156">
        <id>Q7Z698</id>
        <label>SPRED2</label>
    </interactant>
    <organismsDiffer>false</organismsDiffer>
    <experiments>3</experiments>
</comment>
<comment type="interaction">
    <interactant intactId="EBI-749195">
        <id>P60891</id>
    </interactant>
    <interactant intactId="EBI-354861">
        <id>Q9C004</id>
        <label>SPRY4</label>
    </interactant>
    <organismsDiffer>false</organismsDiffer>
    <experiments>3</experiments>
</comment>
<comment type="interaction">
    <interactant intactId="EBI-749195">
        <id>P60891</id>
    </interactant>
    <interactant intactId="EBI-18616594">
        <id>Q8IXS7</id>
        <label>SRGAP3</label>
    </interactant>
    <organismsDiffer>false</organismsDiffer>
    <experiments>3</experiments>
</comment>
<comment type="interaction">
    <interactant intactId="EBI-749195">
        <id>P60891</id>
    </interactant>
    <interactant intactId="EBI-373258">
        <id>O75886</id>
        <label>STAM2</label>
    </interactant>
    <organismsDiffer>false</organismsDiffer>
    <experiments>3</experiments>
</comment>
<comment type="interaction">
    <interactant intactId="EBI-749195">
        <id>P60891</id>
    </interactant>
    <interactant intactId="EBI-10283466">
        <id>A1L190</id>
        <label>SYCE3</label>
    </interactant>
    <organismsDiffer>false</organismsDiffer>
    <experiments>3</experiments>
</comment>
<comment type="interaction">
    <interactant intactId="EBI-749195">
        <id>P60891</id>
    </interactant>
    <interactant intactId="EBI-372899">
        <id>Q13148</id>
        <label>TARDBP</label>
    </interactant>
    <organismsDiffer>false</organismsDiffer>
    <experiments>6</experiments>
</comment>
<comment type="interaction">
    <interactant intactId="EBI-749195">
        <id>P60891</id>
    </interactant>
    <interactant intactId="EBI-745958">
        <id>Q5VWN6</id>
        <label>TASOR2</label>
    </interactant>
    <organismsDiffer>false</organismsDiffer>
    <experiments>3</experiments>
</comment>
<comment type="interaction">
    <interactant intactId="EBI-749195">
        <id>P60891</id>
    </interactant>
    <interactant intactId="EBI-348333">
        <id>Q13569</id>
        <label>TDG</label>
    </interactant>
    <organismsDiffer>false</organismsDiffer>
    <experiments>3</experiments>
</comment>
<comment type="interaction">
    <interactant intactId="EBI-749195">
        <id>P60891</id>
    </interactant>
    <interactant intactId="EBI-2562799">
        <id>Q86WV5</id>
        <label>TEN1</label>
    </interactant>
    <organismsDiffer>false</organismsDiffer>
    <experiments>3</experiments>
</comment>
<comment type="interaction">
    <interactant intactId="EBI-749195">
        <id>P60891</id>
    </interactant>
    <interactant intactId="EBI-752030">
        <id>Q96A09</id>
        <label>TENT5B</label>
    </interactant>
    <organismsDiffer>false</organismsDiffer>
    <experiments>3</experiments>
</comment>
<comment type="interaction">
    <interactant intactId="EBI-749195">
        <id>P60891</id>
    </interactant>
    <interactant intactId="EBI-25842075">
        <id>P21980-2</id>
        <label>TGM2</label>
    </interactant>
    <organismsDiffer>false</organismsDiffer>
    <experiments>3</experiments>
</comment>
<comment type="interaction">
    <interactant intactId="EBI-749195">
        <id>P60891</id>
    </interactant>
    <interactant intactId="EBI-9089156">
        <id>Q8IUR5-4</id>
        <label>TMTC1</label>
    </interactant>
    <organismsDiffer>false</organismsDiffer>
    <experiments>3</experiments>
</comment>
<comment type="interaction">
    <interactant intactId="EBI-749195">
        <id>P60891</id>
    </interactant>
    <interactant intactId="EBI-12806590">
        <id>Q86WV8</id>
        <label>TSC1</label>
    </interactant>
    <organismsDiffer>false</organismsDiffer>
    <experiments>3</experiments>
</comment>
<comment type="interaction">
    <interactant intactId="EBI-749195">
        <id>P60891</id>
    </interactant>
    <interactant intactId="EBI-9090990">
        <id>Q5W5X9-3</id>
        <label>TTC23</label>
    </interactant>
    <organismsDiffer>false</organismsDiffer>
    <experiments>3</experiments>
</comment>
<comment type="interaction">
    <interactant intactId="EBI-749195">
        <id>P60891</id>
    </interactant>
    <interactant intactId="EBI-9088812">
        <id>Q5VYS8-5</id>
        <label>TUT7</label>
    </interactant>
    <organismsDiffer>false</organismsDiffer>
    <experiments>3</experiments>
</comment>
<comment type="interaction">
    <interactant intactId="EBI-749195">
        <id>P60891</id>
    </interactant>
    <interactant intactId="EBI-749370">
        <id>Q9BSL1</id>
        <label>UBAC1</label>
    </interactant>
    <organismsDiffer>false</organismsDiffer>
    <experiments>3</experiments>
</comment>
<comment type="interaction">
    <interactant intactId="EBI-749195">
        <id>P60891</id>
    </interactant>
    <interactant intactId="EBI-348496">
        <id>Q969T4</id>
        <label>UBE2E3</label>
    </interactant>
    <organismsDiffer>false</organismsDiffer>
    <experiments>3</experiments>
</comment>
<comment type="interaction">
    <interactant intactId="EBI-749195">
        <id>P60891</id>
    </interactant>
    <interactant intactId="EBI-10696113">
        <id>O75604-3</id>
        <label>USP2</label>
    </interactant>
    <organismsDiffer>false</organismsDiffer>
    <experiments>3</experiments>
</comment>
<comment type="interaction">
    <interactant intactId="EBI-749195">
        <id>P60891</id>
    </interactant>
    <interactant intactId="EBI-354022">
        <id>P45880</id>
        <label>VDAC2</label>
    </interactant>
    <organismsDiffer>false</organismsDiffer>
    <experiments>3</experiments>
</comment>
<comment type="interaction">
    <interactant intactId="EBI-749195">
        <id>P60891</id>
    </interactant>
    <interactant intactId="EBI-2850578">
        <id>Q8NEZ2</id>
        <label>VPS37A</label>
    </interactant>
    <organismsDiffer>false</organismsDiffer>
    <experiments>3</experiments>
</comment>
<comment type="interaction">
    <interactant intactId="EBI-749195">
        <id>P60891</id>
    </interactant>
    <interactant intactId="EBI-6427899">
        <id>P58304</id>
        <label>VSX2</label>
    </interactant>
    <organismsDiffer>false</organismsDiffer>
    <experiments>3</experiments>
</comment>
<comment type="interaction">
    <interactant intactId="EBI-749195">
        <id>P60891</id>
    </interactant>
    <interactant intactId="EBI-7705033">
        <id>Q9BRX9</id>
        <label>WDR83</label>
    </interactant>
    <organismsDiffer>false</organismsDiffer>
    <experiments>3</experiments>
</comment>
<comment type="interaction">
    <interactant intactId="EBI-749195">
        <id>P60891</id>
    </interactant>
    <interactant intactId="EBI-720609">
        <id>O76024</id>
        <label>WFS1</label>
    </interactant>
    <organismsDiffer>false</organismsDiffer>
    <experiments>3</experiments>
</comment>
<comment type="interaction">
    <interactant intactId="EBI-749195">
        <id>P60891</id>
    </interactant>
    <interactant intactId="EBI-25840023">
        <id>Q15007-2</id>
        <label>WTAP</label>
    </interactant>
    <organismsDiffer>false</organismsDiffer>
    <experiments>3</experiments>
</comment>
<comment type="interaction">
    <interactant intactId="EBI-749195">
        <id>P60891</id>
    </interactant>
    <interactant intactId="EBI-12040603">
        <id>Q9NZC7-5</id>
        <label>WWOX</label>
    </interactant>
    <organismsDiffer>false</organismsDiffer>
    <experiments>3</experiments>
</comment>
<comment type="interaction">
    <interactant intactId="EBI-749195">
        <id>P60891</id>
    </interactant>
    <interactant intactId="EBI-743923">
        <id>O00308</id>
        <label>WWP2</label>
    </interactant>
    <organismsDiffer>false</organismsDiffer>
    <experiments>3</experiments>
</comment>
<comment type="interaction">
    <interactant intactId="EBI-749195">
        <id>P60891</id>
    </interactant>
    <interactant intactId="EBI-2602314">
        <id>Q15776</id>
        <label>ZKSCAN8</label>
    </interactant>
    <organismsDiffer>false</organismsDiffer>
    <experiments>3</experiments>
</comment>
<comment type="interaction">
    <interactant intactId="EBI-749195">
        <id>P60891</id>
    </interactant>
    <interactant intactId="EBI-12055755">
        <id>Q9UJW8-4</id>
        <label>ZNF180</label>
    </interactant>
    <organismsDiffer>false</organismsDiffer>
    <experiments>3</experiments>
</comment>
<comment type="interaction">
    <interactant intactId="EBI-749195">
        <id>P60891</id>
    </interactant>
    <interactant intactId="EBI-8834821">
        <id>Q8WUU4</id>
        <label>ZNF296</label>
    </interactant>
    <organismsDiffer>false</organismsDiffer>
    <experiments>3</experiments>
</comment>
<comment type="interaction">
    <interactant intactId="EBI-749195">
        <id>P60891</id>
    </interactant>
    <interactant intactId="EBI-2813661">
        <id>Q8N895</id>
        <label>ZNF366</label>
    </interactant>
    <organismsDiffer>false</organismsDiffer>
    <experiments>3</experiments>
</comment>
<comment type="interaction">
    <interactant intactId="EBI-749195">
        <id>P60891</id>
    </interactant>
    <interactant intactId="EBI-12010736">
        <id>Q8N0Y2-2</id>
        <label>ZNF444</label>
    </interactant>
    <organismsDiffer>false</organismsDiffer>
    <experiments>3</experiments>
</comment>
<comment type="interaction">
    <interactant intactId="EBI-749195">
        <id>P60891</id>
    </interactant>
    <interactant intactId="EBI-25831733">
        <id>Q96MN9-2</id>
        <label>ZNF488</label>
    </interactant>
    <organismsDiffer>false</organismsDiffer>
    <experiments>3</experiments>
</comment>
<comment type="interaction">
    <interactant intactId="EBI-749195">
        <id>P60891</id>
    </interactant>
    <interactant intactId="EBI-10486136">
        <id>Q6ZNH5</id>
        <label>ZNF497</label>
    </interactant>
    <organismsDiffer>false</organismsDiffer>
    <experiments>3</experiments>
</comment>
<comment type="interaction">
    <interactant intactId="EBI-749195">
        <id>P60891</id>
    </interactant>
    <interactant intactId="EBI-8490788">
        <id>Q68EA5</id>
        <label>ZNF57</label>
    </interactant>
    <organismsDiffer>false</organismsDiffer>
    <experiments>3</experiments>
</comment>
<comment type="interaction">
    <interactant intactId="EBI-749195">
        <id>P60891</id>
    </interactant>
    <interactant intactId="EBI-18036029">
        <id>Q3KNS6-3</id>
        <label>ZNF829</label>
    </interactant>
    <organismsDiffer>false</organismsDiffer>
    <experiments>3</experiments>
</comment>
<comment type="interaction">
    <interactant intactId="EBI-749195">
        <id>P60891</id>
    </interactant>
    <interactant intactId="EBI-751531">
        <id>O15535</id>
        <label>ZSCAN9</label>
    </interactant>
    <organismsDiffer>false</organismsDiffer>
    <experiments>3</experiments>
</comment>
<comment type="interaction">
    <interactant intactId="EBI-749195">
        <id>P60891</id>
    </interactant>
    <interactant intactId="EBI-1538838">
        <id>Q2QGD7</id>
        <label>ZXDC</label>
    </interactant>
    <organismsDiffer>false</organismsDiffer>
    <experiments>3</experiments>
</comment>
<comment type="interaction">
    <interactant intactId="EBI-749195">
        <id>P60891</id>
    </interactant>
    <interactant intactId="EBI-25831617">
        <id>B7Z3E8</id>
    </interactant>
    <organismsDiffer>false</organismsDiffer>
    <experiments>3</experiments>
</comment>
<comment type="interaction">
    <interactant intactId="EBI-749195">
        <id>P60891</id>
    </interactant>
    <interactant intactId="EBI-10259496">
        <id>Q86V28</id>
    </interactant>
    <organismsDiffer>false</organismsDiffer>
    <experiments>3</experiments>
</comment>
<comment type="interaction">
    <interactant intactId="EBI-16205225">
        <id>P60891-1</id>
    </interactant>
    <interactant intactId="EBI-12204387">
        <id>P50053-2</id>
        <label>KHK</label>
    </interactant>
    <organismsDiffer>false</organismsDiffer>
    <experiments>4</experiments>
</comment>
<comment type="alternative products">
    <event type="alternative splicing"/>
    <isoform>
        <id>P60891-1</id>
        <name>1</name>
        <sequence type="displayed"/>
    </isoform>
    <isoform>
        <id>P60891-2</id>
        <name>2</name>
        <sequence type="described" ref="VSP_056028"/>
    </isoform>
</comment>
<comment type="disease">
    <text evidence="8">Phosphoribosyl pyrophosphate synthetase I deficiency is a rare condition caused by mutations in PRPS1 that lead to variable disease phenotypes including optic atrophy, retinitis pigmentosa, ataxia, peripheral neuropathy and hearing loss.</text>
</comment>
<comment type="disease" evidence="9 10">
    <disease id="DI-02162">
        <name>Phosphoribosylpyrophosphate synthetase superactivity</name>
        <acronym>PRPS1 superactivity</acronym>
        <description>Familial disorder characterized by excessive purine production, gout and uric acid urolithiasis.</description>
        <dbReference type="MIM" id="300661"/>
    </disease>
    <text>The disease is caused by variants affecting the gene represented in this entry.</text>
</comment>
<comment type="disease" evidence="5">
    <disease id="DI-01337">
        <name>Charcot-Marie-Tooth disease, X-linked recessive, 5</name>
        <acronym>CMTX5</acronym>
        <description>A form of Charcot-Marie-Tooth disease, a disorder of the peripheral nervous system, characterized by progressive weakness and atrophy, initially of the peroneal muscles and later of the distal muscles of the arms. Charcot-Marie-Tooth disease is classified in two main groups on the basis of electrophysiologic properties and histopathology: primary peripheral demyelinating neuropathies characterized by severely reduced motor nerve conduction velocities (NCVs) (less than 38m/s) and segmental demyelination and remyelination, and primary peripheral axonal neuropathies characterized by normal or mildly reduced NCVs and chronic axonal degeneration and regeneration on nerve biopsy.</description>
        <dbReference type="MIM" id="311070"/>
    </disease>
    <text>The disease is caused by variants affecting the gene represented in this entry.</text>
</comment>
<comment type="disease" evidence="4">
    <disease id="DI-01191">
        <name>ARTS syndrome</name>
        <acronym>ARTS</acronym>
        <description>A disorder characterized by intellectual disability, early-onset hypotonia, ataxia, delayed motor development, hearing impairment, and optic atrophy. Susceptibility to infections, especially of the upper respiratory tract, can result in early death.</description>
        <dbReference type="MIM" id="301835"/>
    </disease>
    <text>The disease is caused by variants affecting the gene represented in this entry.</text>
</comment>
<comment type="disease" evidence="6">
    <disease id="DI-02690">
        <name>Deafness, X-linked, 1</name>
        <acronym>DFNX1</acronym>
        <description>A form of deafness characterized by progressive, severe-to-profound sensorineural hearing loss in males. Females manifest mild to moderate hearing loss.</description>
        <dbReference type="MIM" id="304500"/>
    </disease>
    <text>The disease is caused by variants affecting the gene represented in this entry.</text>
</comment>
<comment type="disease">
    <text evidence="7">A mutation in PRPS1 has been found in a patient with a phenotype that bridges that of PRSPS1 superactivity and ARTS syndrome with uric acid overproduction without gout but with recurrent infections, sensorineural hearing loss and motor neuropathy. The intermediate phenotype may be because Leu-142 variant affects both allosteric sites that are involved in inhibition of PRPS1 and the ATP-binding site, which suggests that this substitution can result both in a gain-of-function and loss-of-function of PRPP synthetase.</text>
</comment>
<comment type="similarity">
    <text evidence="13">Belongs to the ribose-phosphate pyrophosphokinase family.</text>
</comment>
<proteinExistence type="evidence at protein level"/>
<feature type="initiator methionine" description="Removed" evidence="11">
    <location>
        <position position="1"/>
    </location>
</feature>
<feature type="chain" id="PRO_0000141071" description="Ribose-phosphate pyrophosphokinase 1">
    <location>
        <begin position="2"/>
        <end position="318"/>
    </location>
</feature>
<feature type="region of interest" description="Binding of phosphoribosylpyrophosphate" evidence="1">
    <location>
        <begin position="212"/>
        <end position="227"/>
    </location>
</feature>
<feature type="binding site">
    <location>
        <begin position="96"/>
        <end position="101"/>
    </location>
    <ligand>
        <name>ATP</name>
        <dbReference type="ChEBI" id="CHEBI:30616"/>
    </ligand>
</feature>
<feature type="binding site" evidence="1">
    <location>
        <position position="128"/>
    </location>
    <ligand>
        <name>Mg(2+)</name>
        <dbReference type="ChEBI" id="CHEBI:18420"/>
    </ligand>
</feature>
<feature type="binding site">
    <location>
        <position position="130"/>
    </location>
    <ligand>
        <name>ATP</name>
        <dbReference type="ChEBI" id="CHEBI:30616"/>
    </ligand>
</feature>
<feature type="binding site" evidence="1">
    <location>
        <position position="130"/>
    </location>
    <ligand>
        <name>Mg(2+)</name>
        <dbReference type="ChEBI" id="CHEBI:18420"/>
    </ligand>
</feature>
<feature type="binding site" evidence="1">
    <location>
        <position position="139"/>
    </location>
    <ligand>
        <name>Mg(2+)</name>
        <dbReference type="ChEBI" id="CHEBI:18420"/>
    </ligand>
</feature>
<feature type="binding site" evidence="1">
    <location>
        <position position="143"/>
    </location>
    <ligand>
        <name>Mg(2+)</name>
        <dbReference type="ChEBI" id="CHEBI:18420"/>
    </ligand>
</feature>
<feature type="splice variant" id="VSP_056028" description="In isoform 2." evidence="12">
    <location>
        <begin position="1"/>
        <end position="67"/>
    </location>
</feature>
<feature type="sequence variant" id="VAR_072719" description="Found in patients with phosphoribosyl pyrophosphate synthetase I deficiency; likely pathogenic; dbSNP:rs869025594." evidence="8">
    <original>S</original>
    <variation>P</variation>
    <location>
        <position position="16"/>
    </location>
</feature>
<feature type="sequence variant" id="VAR_036941" description="In CMTX5; dbSNP:rs80338731." evidence="5">
    <original>E</original>
    <variation>D</variation>
    <location>
        <position position="43"/>
    </location>
</feature>
<feature type="sequence variant" id="VAR_016044" description="In PRPS1 superactivity; no effect on Km; resistant to inhibition by ADP and GDP; dbSNP:rs137852542." evidence="9">
    <original>D</original>
    <variation>H</variation>
    <location>
        <position position="52"/>
    </location>
</feature>
<feature type="sequence variant" id="VAR_063522" description="In DFNX1; dbSNP:rs180177151." evidence="6">
    <original>D</original>
    <variation>N</variation>
    <location>
        <position position="65"/>
    </location>
</feature>
<feature type="sequence variant" id="VAR_063523" description="In DFNX1; dbSNP:rs180177152." evidence="6">
    <original>A</original>
    <variation>T</variation>
    <location>
        <position position="87"/>
    </location>
</feature>
<feature type="sequence variant" id="VAR_004163" description="In PRPS1 superactivity; no effect on Km; resistant to inhibition by ADP and GDP; dbSNP:rs137852540." evidence="9 10">
    <original>N</original>
    <variation>S</variation>
    <location>
        <position position="114"/>
    </location>
</feature>
<feature type="sequence variant" id="VAR_036942" description="In CMTX5; dbSNP:rs80338732." evidence="5">
    <original>M</original>
    <variation>T</variation>
    <location>
        <position position="115"/>
    </location>
</feature>
<feature type="sequence variant" id="VAR_016045" description="In PRPS1 superactivity; no effect on Km; resistant to inhibition by ADP and GDP; dbSNP:rs137852543." evidence="9">
    <original>L</original>
    <variation>I</variation>
    <location>
        <position position="129"/>
    </location>
</feature>
<feature type="sequence variant" id="VAR_036943" description="In ARTS; dbSNP:rs80338675." evidence="4">
    <original>Q</original>
    <variation>P</variation>
    <location>
        <position position="133"/>
    </location>
</feature>
<feature type="sequence variant" id="VAR_078489" description="Found in a patient with an intermediate phenotype between ARTS and PRPS1 superactivity; likely pathogenic; normal PRPP synthetase activity in fibroblasts; loss of activity in erythrocytes; dbSNP:rs398122855." evidence="7">
    <original>V</original>
    <variation>L</variation>
    <location>
        <position position="142"/>
    </location>
</feature>
<feature type="sequence variant" id="VAR_036944" description="In ARTS; dbSNP:rs80338676." evidence="4">
    <original>L</original>
    <variation>P</variation>
    <location>
        <position position="152"/>
    </location>
</feature>
<feature type="sequence variant" id="VAR_004164" description="In PRPS1 superactivity; no effect on Km; resistant to inhibition by ADP and GDP; dbSNP:rs137852541." evidence="9 10">
    <original>D</original>
    <variation>H</variation>
    <location>
        <position position="183"/>
    </location>
</feature>
<feature type="sequence variant" id="VAR_016046" description="In PRPS1 superactivity; no effect on Km; resistant to inhibition by ADP and GDP; dbSNP:rs137852544." evidence="9">
    <original>A</original>
    <variation>V</variation>
    <location>
        <position position="190"/>
    </location>
</feature>
<feature type="sequence variant" id="VAR_016047" description="In PRPS1 superactivity; no effect on Km; resistant to inhibition by ADP and GDP; dbSNP:rs137852545." evidence="9">
    <original>H</original>
    <variation>Q</variation>
    <location>
        <position position="193"/>
    </location>
</feature>
<feature type="sequence variant" id="VAR_036593" description="In a breast cancer sample; somatic mutation." evidence="3">
    <original>D</original>
    <variation>H</variation>
    <location>
        <position position="203"/>
    </location>
</feature>
<feature type="sequence variant" id="VAR_036594" description="In a breast cancer sample; somatic mutation." evidence="3">
    <original>V</original>
    <variation>G</variation>
    <location>
        <position position="219"/>
    </location>
</feature>
<feature type="sequence variant" id="VAR_036595" description="In a colorectal cancer sample; somatic mutation." evidence="3">
    <original>H</original>
    <variation>D</variation>
    <location>
        <position position="231"/>
    </location>
</feature>
<feature type="sequence variant" id="VAR_063524" description="In DFNX1; dbSNP:rs180177153." evidence="6">
    <original>I</original>
    <variation>T</variation>
    <location>
        <position position="290"/>
    </location>
</feature>
<feature type="sequence variant" id="VAR_063525" description="In DFNX1; dbSNP:rs180177154." evidence="6">
    <original>G</original>
    <variation>R</variation>
    <location>
        <position position="306"/>
    </location>
</feature>
<feature type="mutagenesis site" description="Reduces catalytic activity." evidence="2">
    <original>S</original>
    <variation>A</variation>
    <location>
        <position position="132"/>
    </location>
</feature>
<feature type="mutagenesis site" description="No effect on catalytic activity." evidence="2">
    <original>S</original>
    <variation>F</variation>
    <location>
        <position position="132"/>
    </location>
</feature>
<feature type="mutagenesis site" description="No effect on catalytic activity." evidence="2">
    <original>N</original>
    <variation>H</variation>
    <location>
        <position position="144"/>
    </location>
</feature>
<feature type="mutagenesis site" description="No effect on catalytic activity." evidence="2">
    <original>Y</original>
    <variation>F</variation>
    <location>
        <position position="146"/>
    </location>
</feature>
<feature type="mutagenesis site" description="Reduces catalytic activity." evidence="2">
    <original>Y</original>
    <variation>M</variation>
    <location>
        <position position="146"/>
    </location>
</feature>
<feature type="sequence conflict" description="In Ref. 3; BAG35584." evidence="13" ref="3">
    <original>A</original>
    <variation>G</variation>
    <location>
        <position position="82"/>
    </location>
</feature>
<feature type="sequence conflict" description="In Ref. 3; BAG35584." evidence="13" ref="3">
    <original>D</original>
    <variation>G</variation>
    <location>
        <position position="122"/>
    </location>
</feature>
<feature type="sequence conflict" description="In Ref. 3; BAG35584." evidence="13" ref="3">
    <original>E</original>
    <variation>G</variation>
    <location>
        <position position="278"/>
    </location>
</feature>
<feature type="strand" evidence="21">
    <location>
        <begin position="4"/>
        <end position="8"/>
    </location>
</feature>
<feature type="helix" evidence="21">
    <location>
        <begin position="13"/>
        <end position="22"/>
    </location>
</feature>
<feature type="strand" evidence="21">
    <location>
        <begin position="30"/>
        <end position="34"/>
    </location>
</feature>
<feature type="strand" evidence="18">
    <location>
        <begin position="36"/>
        <end position="38"/>
    </location>
</feature>
<feature type="strand" evidence="21">
    <location>
        <begin position="40"/>
        <end position="44"/>
    </location>
</feature>
<feature type="strand" evidence="21">
    <location>
        <begin position="52"/>
        <end position="56"/>
    </location>
</feature>
<feature type="helix" evidence="21">
    <location>
        <begin position="63"/>
        <end position="79"/>
    </location>
</feature>
<feature type="strand" evidence="21">
    <location>
        <begin position="83"/>
        <end position="91"/>
    </location>
</feature>
<feature type="turn" evidence="21">
    <location>
        <begin position="93"/>
        <end position="96"/>
    </location>
</feature>
<feature type="strand" evidence="22">
    <location>
        <begin position="101"/>
        <end position="104"/>
    </location>
</feature>
<feature type="helix" evidence="21">
    <location>
        <begin position="108"/>
        <end position="119"/>
    </location>
</feature>
<feature type="strand" evidence="21">
    <location>
        <begin position="122"/>
        <end position="128"/>
    </location>
</feature>
<feature type="helix" evidence="21">
    <location>
        <begin position="132"/>
        <end position="137"/>
    </location>
</feature>
<feature type="strand" evidence="21">
    <location>
        <begin position="142"/>
        <end position="145"/>
    </location>
</feature>
<feature type="helix" evidence="21">
    <location>
        <begin position="148"/>
        <end position="158"/>
    </location>
</feature>
<feature type="turn" evidence="21">
    <location>
        <begin position="160"/>
        <end position="164"/>
    </location>
</feature>
<feature type="strand" evidence="21">
    <location>
        <begin position="166"/>
        <end position="171"/>
    </location>
</feature>
<feature type="helix" evidence="21">
    <location>
        <begin position="172"/>
        <end position="174"/>
    </location>
</feature>
<feature type="helix" evidence="21">
    <location>
        <begin position="175"/>
        <end position="185"/>
    </location>
</feature>
<feature type="strand" evidence="21">
    <location>
        <begin position="191"/>
        <end position="194"/>
    </location>
</feature>
<feature type="strand" evidence="20">
    <location>
        <begin position="199"/>
        <end position="201"/>
    </location>
</feature>
<feature type="strand" evidence="21">
    <location>
        <begin position="205"/>
        <end position="209"/>
    </location>
</feature>
<feature type="strand" evidence="21">
    <location>
        <begin position="214"/>
        <end position="226"/>
    </location>
</feature>
<feature type="helix" evidence="21">
    <location>
        <begin position="227"/>
        <end position="238"/>
    </location>
</feature>
<feature type="strand" evidence="21">
    <location>
        <begin position="242"/>
        <end position="251"/>
    </location>
</feature>
<feature type="turn" evidence="19">
    <location>
        <begin position="254"/>
        <end position="256"/>
    </location>
</feature>
<feature type="helix" evidence="21">
    <location>
        <begin position="257"/>
        <end position="263"/>
    </location>
</feature>
<feature type="strand" evidence="21">
    <location>
        <begin position="267"/>
        <end position="272"/>
    </location>
</feature>
<feature type="helix" evidence="21">
    <location>
        <begin position="278"/>
        <end position="283"/>
    </location>
</feature>
<feature type="strand" evidence="21">
    <location>
        <begin position="287"/>
        <end position="290"/>
    </location>
</feature>
<feature type="helix" evidence="21">
    <location>
        <begin position="293"/>
        <end position="305"/>
    </location>
</feature>
<feature type="helix" evidence="21">
    <location>
        <begin position="310"/>
        <end position="313"/>
    </location>
</feature>
<dbReference type="EC" id="2.7.6.1" evidence="2 5 9"/>
<dbReference type="EMBL" id="X15331">
    <property type="protein sequence ID" value="CAA33386.1"/>
    <property type="molecule type" value="mRNA"/>
</dbReference>
<dbReference type="EMBL" id="D00860">
    <property type="protein sequence ID" value="BAA00733.1"/>
    <property type="molecule type" value="mRNA"/>
</dbReference>
<dbReference type="EMBL" id="AK297968">
    <property type="protein sequence ID" value="BAG60278.1"/>
    <property type="molecule type" value="mRNA"/>
</dbReference>
<dbReference type="EMBL" id="AK312706">
    <property type="protein sequence ID" value="BAG35584.1"/>
    <property type="molecule type" value="mRNA"/>
</dbReference>
<dbReference type="EMBL" id="AL137787">
    <property type="status" value="NOT_ANNOTATED_CDS"/>
    <property type="molecule type" value="Genomic_DNA"/>
</dbReference>
<dbReference type="EMBL" id="AL772400">
    <property type="status" value="NOT_ANNOTATED_CDS"/>
    <property type="molecule type" value="Genomic_DNA"/>
</dbReference>
<dbReference type="EMBL" id="CH471120">
    <property type="protein sequence ID" value="EAX02709.1"/>
    <property type="molecule type" value="Genomic_DNA"/>
</dbReference>
<dbReference type="EMBL" id="CH471120">
    <property type="protein sequence ID" value="EAX02710.1"/>
    <property type="molecule type" value="Genomic_DNA"/>
</dbReference>
<dbReference type="EMBL" id="CH471120">
    <property type="protein sequence ID" value="EAX02711.1"/>
    <property type="molecule type" value="Genomic_DNA"/>
</dbReference>
<dbReference type="EMBL" id="BC001605">
    <property type="protein sequence ID" value="AAH01605.1"/>
    <property type="molecule type" value="mRNA"/>
</dbReference>
<dbReference type="CCDS" id="CCDS14529.1">
    <molecule id="P60891-1"/>
</dbReference>
<dbReference type="PIR" id="JX0159">
    <property type="entry name" value="KIHUR1"/>
</dbReference>
<dbReference type="RefSeq" id="NP_001191331.1">
    <property type="nucleotide sequence ID" value="NM_001204402.1"/>
</dbReference>
<dbReference type="RefSeq" id="NP_002755.1">
    <molecule id="P60891-1"/>
    <property type="nucleotide sequence ID" value="NM_002764.4"/>
</dbReference>
<dbReference type="PDB" id="2H06">
    <property type="method" value="X-ray"/>
    <property type="resolution" value="2.20 A"/>
    <property type="chains" value="A/B=1-318"/>
</dbReference>
<dbReference type="PDB" id="2H07">
    <property type="method" value="X-ray"/>
    <property type="resolution" value="2.20 A"/>
    <property type="chains" value="A/B=1-318"/>
</dbReference>
<dbReference type="PDB" id="2H08">
    <property type="method" value="X-ray"/>
    <property type="resolution" value="2.50 A"/>
    <property type="chains" value="A/B=1-318"/>
</dbReference>
<dbReference type="PDB" id="2HCR">
    <property type="method" value="X-ray"/>
    <property type="resolution" value="2.20 A"/>
    <property type="chains" value="A/B=1-318"/>
</dbReference>
<dbReference type="PDB" id="3EFH">
    <property type="method" value="X-ray"/>
    <property type="resolution" value="2.60 A"/>
    <property type="chains" value="A/B=1-318"/>
</dbReference>
<dbReference type="PDB" id="3S5J">
    <property type="method" value="X-ray"/>
    <property type="resolution" value="2.02 A"/>
    <property type="chains" value="A/B=1-318"/>
</dbReference>
<dbReference type="PDB" id="4F8E">
    <property type="method" value="X-ray"/>
    <property type="resolution" value="2.27 A"/>
    <property type="chains" value="A/B=1-318"/>
</dbReference>
<dbReference type="PDB" id="4LYG">
    <property type="method" value="X-ray"/>
    <property type="resolution" value="3.00 A"/>
    <property type="chains" value="A/B=1-318"/>
</dbReference>
<dbReference type="PDB" id="4LZN">
    <property type="method" value="X-ray"/>
    <property type="resolution" value="2.14 A"/>
    <property type="chains" value="A/B=1-318"/>
</dbReference>
<dbReference type="PDB" id="4LZO">
    <property type="method" value="X-ray"/>
    <property type="resolution" value="3.31 A"/>
    <property type="chains" value="A/B=1-318"/>
</dbReference>
<dbReference type="PDB" id="4M0P">
    <property type="method" value="X-ray"/>
    <property type="resolution" value="2.11 A"/>
    <property type="chains" value="A/B=1-318"/>
</dbReference>
<dbReference type="PDB" id="4M0U">
    <property type="method" value="X-ray"/>
    <property type="resolution" value="2.74 A"/>
    <property type="chains" value="A/B=1-318"/>
</dbReference>
<dbReference type="PDB" id="8DBC">
    <property type="method" value="EM"/>
    <property type="resolution" value="3.20 A"/>
    <property type="chains" value="A/B/C/D/E/F=1-318"/>
</dbReference>
<dbReference type="PDB" id="8DBD">
    <property type="method" value="EM"/>
    <property type="resolution" value="3.20 A"/>
    <property type="chains" value="A/B/C/D/E/F/G/H/I/J/K/L=1-318"/>
</dbReference>
<dbReference type="PDB" id="8DBE">
    <property type="method" value="EM"/>
    <property type="resolution" value="2.10 A"/>
    <property type="chains" value="A/B/C/D/E/F=1-318"/>
</dbReference>
<dbReference type="PDB" id="8DBF">
    <property type="method" value="EM"/>
    <property type="resolution" value="2.20 A"/>
    <property type="chains" value="A/B/C/D/E/F/G/H/I/J/K/L=2-318"/>
</dbReference>
<dbReference type="PDB" id="8DBG">
    <property type="method" value="EM"/>
    <property type="resolution" value="2.20 A"/>
    <property type="chains" value="A/B/C/D/E/F=2-318"/>
</dbReference>
<dbReference type="PDB" id="8DBH">
    <property type="method" value="EM"/>
    <property type="resolution" value="2.20 A"/>
    <property type="chains" value="A/B/C/D/E/F/G/H/I/J/K/L=2-318"/>
</dbReference>
<dbReference type="PDB" id="8DBI">
    <property type="method" value="EM"/>
    <property type="resolution" value="2.00 A"/>
    <property type="chains" value="A/B/C/D/E/F=2-318"/>
</dbReference>
<dbReference type="PDB" id="8DBJ">
    <property type="method" value="EM"/>
    <property type="resolution" value="2.00 A"/>
    <property type="chains" value="A/B/C/D/E/F/G/H/I/J/K/L=2-318"/>
</dbReference>
<dbReference type="PDB" id="8DBK">
    <property type="method" value="EM"/>
    <property type="resolution" value="2.10 A"/>
    <property type="chains" value="A/B/C/D/E/F=2-318"/>
</dbReference>
<dbReference type="PDB" id="8DBL">
    <property type="method" value="EM"/>
    <property type="resolution" value="2.40 A"/>
    <property type="chains" value="A/B/C/D/E/F=2-318"/>
</dbReference>
<dbReference type="PDB" id="8DBM">
    <property type="method" value="EM"/>
    <property type="resolution" value="2.40 A"/>
    <property type="chains" value="A/B/C/D/E/F/G/H/I/J/K/L=2-318"/>
</dbReference>
<dbReference type="PDB" id="8DBN">
    <property type="method" value="EM"/>
    <property type="resolution" value="2.40 A"/>
    <property type="chains" value="A/B/C/D/E/F=2-318"/>
</dbReference>
<dbReference type="PDB" id="8DBO">
    <property type="method" value="EM"/>
    <property type="resolution" value="2.50 A"/>
    <property type="chains" value="A/B/C/D/E/F=2-318"/>
</dbReference>
<dbReference type="PDBsum" id="2H06"/>
<dbReference type="PDBsum" id="2H07"/>
<dbReference type="PDBsum" id="2H08"/>
<dbReference type="PDBsum" id="2HCR"/>
<dbReference type="PDBsum" id="3EFH"/>
<dbReference type="PDBsum" id="3S5J"/>
<dbReference type="PDBsum" id="4F8E"/>
<dbReference type="PDBsum" id="4LYG"/>
<dbReference type="PDBsum" id="4LZN"/>
<dbReference type="PDBsum" id="4LZO"/>
<dbReference type="PDBsum" id="4M0P"/>
<dbReference type="PDBsum" id="4M0U"/>
<dbReference type="PDBsum" id="8DBC"/>
<dbReference type="PDBsum" id="8DBD"/>
<dbReference type="PDBsum" id="8DBE"/>
<dbReference type="PDBsum" id="8DBF"/>
<dbReference type="PDBsum" id="8DBG"/>
<dbReference type="PDBsum" id="8DBH"/>
<dbReference type="PDBsum" id="8DBI"/>
<dbReference type="PDBsum" id="8DBJ"/>
<dbReference type="PDBsum" id="8DBK"/>
<dbReference type="PDBsum" id="8DBL"/>
<dbReference type="PDBsum" id="8DBM"/>
<dbReference type="PDBsum" id="8DBN"/>
<dbReference type="PDBsum" id="8DBO"/>
<dbReference type="EMDB" id="EMD-27279"/>
<dbReference type="EMDB" id="EMD-27280"/>
<dbReference type="EMDB" id="EMD-27281"/>
<dbReference type="EMDB" id="EMD-27282"/>
<dbReference type="EMDB" id="EMD-27283"/>
<dbReference type="EMDB" id="EMD-27284"/>
<dbReference type="EMDB" id="EMD-27285"/>
<dbReference type="EMDB" id="EMD-27286"/>
<dbReference type="EMDB" id="EMD-27287"/>
<dbReference type="EMDB" id="EMD-27288"/>
<dbReference type="EMDB" id="EMD-27289"/>
<dbReference type="EMDB" id="EMD-27290"/>
<dbReference type="EMDB" id="EMD-27291"/>
<dbReference type="EMDB" id="EMD-27292"/>
<dbReference type="EMDB" id="EMD-27293"/>
<dbReference type="EMDB" id="EMD-27294"/>
<dbReference type="EMDB" id="EMD-27295"/>
<dbReference type="SMR" id="P60891"/>
<dbReference type="BioGRID" id="111615">
    <property type="interactions" value="224"/>
</dbReference>
<dbReference type="DIP" id="DIP-61999N"/>
<dbReference type="FunCoup" id="P60891">
    <property type="interactions" value="1567"/>
</dbReference>
<dbReference type="IntAct" id="P60891">
    <property type="interactions" value="232"/>
</dbReference>
<dbReference type="MINT" id="P60891"/>
<dbReference type="STRING" id="9606.ENSP00000361512"/>
<dbReference type="BindingDB" id="P60891"/>
<dbReference type="ChEMBL" id="CHEMBL2638"/>
<dbReference type="DrugCentral" id="P60891"/>
<dbReference type="GlyGen" id="P60891">
    <property type="glycosylation" value="2 sites, 1 O-linked glycan (2 sites)"/>
</dbReference>
<dbReference type="iPTMnet" id="P60891"/>
<dbReference type="PhosphoSitePlus" id="P60891"/>
<dbReference type="SwissPalm" id="P60891"/>
<dbReference type="BioMuta" id="PRPS1"/>
<dbReference type="DMDM" id="46397477"/>
<dbReference type="jPOST" id="P60891"/>
<dbReference type="MassIVE" id="P60891"/>
<dbReference type="PaxDb" id="9606-ENSP00000361512"/>
<dbReference type="PeptideAtlas" id="P60891"/>
<dbReference type="ProteomicsDB" id="4706"/>
<dbReference type="ProteomicsDB" id="57233">
    <molecule id="P60891-1"/>
</dbReference>
<dbReference type="Pumba" id="P60891"/>
<dbReference type="Antibodypedia" id="29313">
    <property type="antibodies" value="179 antibodies from 29 providers"/>
</dbReference>
<dbReference type="DNASU" id="5631"/>
<dbReference type="Ensembl" id="ENST00000372435.10">
    <molecule id="P60891-1"/>
    <property type="protein sequence ID" value="ENSP00000361512.4"/>
    <property type="gene ID" value="ENSG00000147224.13"/>
</dbReference>
<dbReference type="GeneID" id="5631"/>
<dbReference type="KEGG" id="hsa:5631"/>
<dbReference type="MANE-Select" id="ENST00000372435.10">
    <property type="protein sequence ID" value="ENSP00000361512.4"/>
    <property type="RefSeq nucleotide sequence ID" value="NM_002764.4"/>
    <property type="RefSeq protein sequence ID" value="NP_002755.1"/>
</dbReference>
<dbReference type="UCSC" id="uc004ene.5">
    <molecule id="P60891-1"/>
    <property type="organism name" value="human"/>
</dbReference>
<dbReference type="AGR" id="HGNC:9462"/>
<dbReference type="CTD" id="5631"/>
<dbReference type="DisGeNET" id="5631"/>
<dbReference type="GeneCards" id="PRPS1"/>
<dbReference type="GeneReviews" id="PRPS1"/>
<dbReference type="HGNC" id="HGNC:9462">
    <property type="gene designation" value="PRPS1"/>
</dbReference>
<dbReference type="HPA" id="ENSG00000147224">
    <property type="expression patterns" value="Low tissue specificity"/>
</dbReference>
<dbReference type="MalaCards" id="PRPS1"/>
<dbReference type="MIM" id="300661">
    <property type="type" value="phenotype"/>
</dbReference>
<dbReference type="MIM" id="301835">
    <property type="type" value="phenotype"/>
</dbReference>
<dbReference type="MIM" id="304500">
    <property type="type" value="phenotype"/>
</dbReference>
<dbReference type="MIM" id="311070">
    <property type="type" value="phenotype"/>
</dbReference>
<dbReference type="MIM" id="311850">
    <property type="type" value="gene"/>
</dbReference>
<dbReference type="neXtProt" id="NX_P60891"/>
<dbReference type="OpenTargets" id="ENSG00000147224"/>
<dbReference type="Orphanet" id="1187">
    <property type="disease" value="Lethal ataxia with deafness and optic atrophy"/>
</dbReference>
<dbReference type="Orphanet" id="411536">
    <property type="disease" value="Mild phosphoribosylpyrophosphate synthetase superactivity"/>
</dbReference>
<dbReference type="Orphanet" id="90625">
    <property type="disease" value="Rare X-linked non-syndromic sensorineural deafness type DFN"/>
</dbReference>
<dbReference type="Orphanet" id="411543">
    <property type="disease" value="Severe phosphoribosylpyrophosphate synthetase superactivity"/>
</dbReference>
<dbReference type="Orphanet" id="99014">
    <property type="disease" value="X-linked Charcot-Marie-Tooth disease type 5"/>
</dbReference>
<dbReference type="Orphanet" id="423479">
    <property type="disease" value="X-linked intellectual disability-limb spasticity-retinal dystrophy-arginine vasopressin deficiency"/>
</dbReference>
<dbReference type="PharmGKB" id="PA33817"/>
<dbReference type="VEuPathDB" id="HostDB:ENSG00000147224"/>
<dbReference type="eggNOG" id="KOG1448">
    <property type="taxonomic scope" value="Eukaryota"/>
</dbReference>
<dbReference type="GeneTree" id="ENSGT00950000182803"/>
<dbReference type="HOGENOM" id="CLU_033546_4_0_1"/>
<dbReference type="InParanoid" id="P60891"/>
<dbReference type="OMA" id="YFGWARQ"/>
<dbReference type="OrthoDB" id="413572at2759"/>
<dbReference type="PAN-GO" id="P60891">
    <property type="GO annotations" value="6 GO annotations based on evolutionary models"/>
</dbReference>
<dbReference type="PhylomeDB" id="P60891"/>
<dbReference type="TreeFam" id="TF106366"/>
<dbReference type="BioCyc" id="MetaCyc:HS07410-MONOMER"/>
<dbReference type="BRENDA" id="2.7.6.1">
    <property type="organism ID" value="2681"/>
</dbReference>
<dbReference type="PathwayCommons" id="P60891"/>
<dbReference type="Reactome" id="R-HSA-73843">
    <property type="pathway name" value="5-Phosphoribose 1-diphosphate biosynthesis"/>
</dbReference>
<dbReference type="SABIO-RK" id="P60891"/>
<dbReference type="SignaLink" id="P60891"/>
<dbReference type="SIGNOR" id="P60891"/>
<dbReference type="UniPathway" id="UPA00087">
    <property type="reaction ID" value="UER00172"/>
</dbReference>
<dbReference type="BioGRID-ORCS" id="5631">
    <property type="hits" value="20 hits in 779 CRISPR screens"/>
</dbReference>
<dbReference type="CD-CODE" id="91857CE7">
    <property type="entry name" value="Nucleolus"/>
</dbReference>
<dbReference type="CD-CODE" id="FB4E32DD">
    <property type="entry name" value="Presynaptic clusters and postsynaptic densities"/>
</dbReference>
<dbReference type="ChiTaRS" id="PRPS1">
    <property type="organism name" value="human"/>
</dbReference>
<dbReference type="EvolutionaryTrace" id="P60891"/>
<dbReference type="GenomeRNAi" id="5631"/>
<dbReference type="Pharos" id="P60891">
    <property type="development level" value="Tbio"/>
</dbReference>
<dbReference type="PRO" id="PR:P60891"/>
<dbReference type="Proteomes" id="UP000005640">
    <property type="component" value="Chromosome X"/>
</dbReference>
<dbReference type="RNAct" id="P60891">
    <property type="molecule type" value="protein"/>
</dbReference>
<dbReference type="Bgee" id="ENSG00000147224">
    <property type="expression patterns" value="Expressed in islet of Langerhans and 207 other cell types or tissues"/>
</dbReference>
<dbReference type="ExpressionAtlas" id="P60891">
    <property type="expression patterns" value="baseline and differential"/>
</dbReference>
<dbReference type="GO" id="GO:0005737">
    <property type="term" value="C:cytoplasm"/>
    <property type="evidence" value="ECO:0000318"/>
    <property type="project" value="GO_Central"/>
</dbReference>
<dbReference type="GO" id="GO:0005829">
    <property type="term" value="C:cytosol"/>
    <property type="evidence" value="ECO:0000304"/>
    <property type="project" value="Reactome"/>
</dbReference>
<dbReference type="GO" id="GO:0002189">
    <property type="term" value="C:ribose phosphate diphosphokinase complex"/>
    <property type="evidence" value="ECO:0000318"/>
    <property type="project" value="GO_Central"/>
</dbReference>
<dbReference type="GO" id="GO:0005524">
    <property type="term" value="F:ATP binding"/>
    <property type="evidence" value="ECO:0000314"/>
    <property type="project" value="UniProtKB"/>
</dbReference>
<dbReference type="GO" id="GO:0042802">
    <property type="term" value="F:identical protein binding"/>
    <property type="evidence" value="ECO:0000353"/>
    <property type="project" value="IntAct"/>
</dbReference>
<dbReference type="GO" id="GO:0016301">
    <property type="term" value="F:kinase activity"/>
    <property type="evidence" value="ECO:0007669"/>
    <property type="project" value="UniProtKB-KW"/>
</dbReference>
<dbReference type="GO" id="GO:0000287">
    <property type="term" value="F:magnesium ion binding"/>
    <property type="evidence" value="ECO:0007669"/>
    <property type="project" value="InterPro"/>
</dbReference>
<dbReference type="GO" id="GO:0042803">
    <property type="term" value="F:protein homodimerization activity"/>
    <property type="evidence" value="ECO:0000353"/>
    <property type="project" value="UniProtKB"/>
</dbReference>
<dbReference type="GO" id="GO:0004749">
    <property type="term" value="F:ribose phosphate diphosphokinase activity"/>
    <property type="evidence" value="ECO:0000314"/>
    <property type="project" value="UniProtKB"/>
</dbReference>
<dbReference type="GO" id="GO:0006015">
    <property type="term" value="P:5-phosphoribose 1-diphosphate biosynthetic process"/>
    <property type="evidence" value="ECO:0000318"/>
    <property type="project" value="GO_Central"/>
</dbReference>
<dbReference type="GO" id="GO:0046101">
    <property type="term" value="P:hypoxanthine biosynthetic process"/>
    <property type="evidence" value="ECO:0000315"/>
    <property type="project" value="UniProtKB"/>
</dbReference>
<dbReference type="GO" id="GO:0007399">
    <property type="term" value="P:nervous system development"/>
    <property type="evidence" value="ECO:0000315"/>
    <property type="project" value="UniProtKB"/>
</dbReference>
<dbReference type="GO" id="GO:0006144">
    <property type="term" value="P:purine nucleobase metabolic process"/>
    <property type="evidence" value="ECO:0000315"/>
    <property type="project" value="UniProtKB"/>
</dbReference>
<dbReference type="GO" id="GO:0006164">
    <property type="term" value="P:purine nucleotide biosynthetic process"/>
    <property type="evidence" value="ECO:0000315"/>
    <property type="project" value="UniProtKB"/>
</dbReference>
<dbReference type="GO" id="GO:0006221">
    <property type="term" value="P:pyrimidine nucleotide biosynthetic process"/>
    <property type="evidence" value="ECO:0000303"/>
    <property type="project" value="UniProtKB"/>
</dbReference>
<dbReference type="GO" id="GO:0009156">
    <property type="term" value="P:ribonucleoside monophosphate biosynthetic process"/>
    <property type="evidence" value="ECO:0007669"/>
    <property type="project" value="InterPro"/>
</dbReference>
<dbReference type="GO" id="GO:0034418">
    <property type="term" value="P:urate biosynthetic process"/>
    <property type="evidence" value="ECO:0000315"/>
    <property type="project" value="UniProtKB"/>
</dbReference>
<dbReference type="CDD" id="cd06223">
    <property type="entry name" value="PRTases_typeI"/>
    <property type="match status" value="1"/>
</dbReference>
<dbReference type="FunFam" id="3.40.50.2020:FF:000031">
    <property type="entry name" value="Probable PRS4-ribose-phosphate pyrophosphokinase 3"/>
    <property type="match status" value="1"/>
</dbReference>
<dbReference type="FunFam" id="3.40.50.2020:FF:000005">
    <property type="entry name" value="Ribose-phosphate pyrophosphokinase 1"/>
    <property type="match status" value="1"/>
</dbReference>
<dbReference type="Gene3D" id="3.40.50.2020">
    <property type="match status" value="2"/>
</dbReference>
<dbReference type="HAMAP" id="MF_00583_B">
    <property type="entry name" value="RibP_PPkinase_B"/>
    <property type="match status" value="1"/>
</dbReference>
<dbReference type="InterPro" id="IPR000842">
    <property type="entry name" value="PRib_PP_synth_CS"/>
</dbReference>
<dbReference type="InterPro" id="IPR029099">
    <property type="entry name" value="Pribosyltran_N"/>
</dbReference>
<dbReference type="InterPro" id="IPR000836">
    <property type="entry name" value="PRibTrfase_dom"/>
</dbReference>
<dbReference type="InterPro" id="IPR029057">
    <property type="entry name" value="PRTase-like"/>
</dbReference>
<dbReference type="InterPro" id="IPR005946">
    <property type="entry name" value="Rib-P_diPkinase"/>
</dbReference>
<dbReference type="InterPro" id="IPR037515">
    <property type="entry name" value="Rib-P_diPkinase_bac"/>
</dbReference>
<dbReference type="NCBIfam" id="NF002320">
    <property type="entry name" value="PRK01259.1"/>
    <property type="match status" value="1"/>
</dbReference>
<dbReference type="NCBIfam" id="TIGR01251">
    <property type="entry name" value="ribP_PPkin"/>
    <property type="match status" value="1"/>
</dbReference>
<dbReference type="PANTHER" id="PTHR10210">
    <property type="entry name" value="RIBOSE-PHOSPHATE DIPHOSPHOKINASE FAMILY MEMBER"/>
    <property type="match status" value="1"/>
</dbReference>
<dbReference type="PANTHER" id="PTHR10210:SF118">
    <property type="entry name" value="RIBOSE-PHOSPHATE PYROPHOSPHOKINASE 1"/>
    <property type="match status" value="1"/>
</dbReference>
<dbReference type="Pfam" id="PF14572">
    <property type="entry name" value="Pribosyl_synth"/>
    <property type="match status" value="1"/>
</dbReference>
<dbReference type="Pfam" id="PF13793">
    <property type="entry name" value="Pribosyltran_N"/>
    <property type="match status" value="1"/>
</dbReference>
<dbReference type="SMART" id="SM01400">
    <property type="entry name" value="Pribosyltran_N"/>
    <property type="match status" value="1"/>
</dbReference>
<dbReference type="SUPFAM" id="SSF53271">
    <property type="entry name" value="PRTase-like"/>
    <property type="match status" value="1"/>
</dbReference>
<dbReference type="PROSITE" id="PS00114">
    <property type="entry name" value="PRPP_SYNTHASE"/>
    <property type="match status" value="1"/>
</dbReference>
<accession>P60891</accession>
<accession>B1ALA8</accession>
<accession>B2R6T7</accession>
<accession>B4DNL6</accession>
<accession>D3DUX6</accession>
<accession>P09329</accession>
<evidence type="ECO:0000255" key="1"/>
<evidence type="ECO:0000269" key="2">
    <source>
    </source>
</evidence>
<evidence type="ECO:0000269" key="3">
    <source>
    </source>
</evidence>
<evidence type="ECO:0000269" key="4">
    <source>
    </source>
</evidence>
<evidence type="ECO:0000269" key="5">
    <source>
    </source>
</evidence>
<evidence type="ECO:0000269" key="6">
    <source>
    </source>
</evidence>
<evidence type="ECO:0000269" key="7">
    <source>
    </source>
</evidence>
<evidence type="ECO:0000269" key="8">
    <source>
    </source>
</evidence>
<evidence type="ECO:0000269" key="9">
    <source>
    </source>
</evidence>
<evidence type="ECO:0000269" key="10">
    <source ref="12"/>
</evidence>
<evidence type="ECO:0000269" key="11">
    <source ref="8"/>
</evidence>
<evidence type="ECO:0000303" key="12">
    <source>
    </source>
</evidence>
<evidence type="ECO:0000305" key="13"/>
<evidence type="ECO:0000305" key="14">
    <source>
    </source>
</evidence>
<evidence type="ECO:0000305" key="15">
    <source>
    </source>
</evidence>
<evidence type="ECO:0000305" key="16">
    <source>
    </source>
</evidence>
<evidence type="ECO:0000312" key="17">
    <source>
        <dbReference type="HGNC" id="HGNC:9462"/>
    </source>
</evidence>
<evidence type="ECO:0007829" key="18">
    <source>
        <dbReference type="PDB" id="2H06"/>
    </source>
</evidence>
<evidence type="ECO:0007829" key="19">
    <source>
        <dbReference type="PDB" id="4LYG"/>
    </source>
</evidence>
<evidence type="ECO:0007829" key="20">
    <source>
        <dbReference type="PDB" id="8DBE"/>
    </source>
</evidence>
<evidence type="ECO:0007829" key="21">
    <source>
        <dbReference type="PDB" id="8DBI"/>
    </source>
</evidence>
<evidence type="ECO:0007829" key="22">
    <source>
        <dbReference type="PDB" id="8DBK"/>
    </source>
</evidence>